<organism>
    <name type="scientific">Xenopus laevis</name>
    <name type="common">African clawed frog</name>
    <dbReference type="NCBI Taxonomy" id="8355"/>
    <lineage>
        <taxon>Eukaryota</taxon>
        <taxon>Metazoa</taxon>
        <taxon>Chordata</taxon>
        <taxon>Craniata</taxon>
        <taxon>Vertebrata</taxon>
        <taxon>Euteleostomi</taxon>
        <taxon>Amphibia</taxon>
        <taxon>Batrachia</taxon>
        <taxon>Anura</taxon>
        <taxon>Pipoidea</taxon>
        <taxon>Pipidae</taxon>
        <taxon>Xenopodinae</taxon>
        <taxon>Xenopus</taxon>
        <taxon>Xenopus</taxon>
    </lineage>
</organism>
<proteinExistence type="evidence at protein level"/>
<protein>
    <recommendedName>
        <fullName>Histone H3.2</fullName>
    </recommendedName>
</protein>
<keyword id="KW-0002">3D-structure</keyword>
<keyword id="KW-0007">Acetylation</keyword>
<keyword id="KW-0013">ADP-ribosylation</keyword>
<keyword id="KW-0158">Chromosome</keyword>
<keyword id="KW-0164">Citrullination</keyword>
<keyword id="KW-0238">DNA-binding</keyword>
<keyword id="KW-0379">Hydroxylation</keyword>
<keyword id="KW-0449">Lipoprotein</keyword>
<keyword id="KW-0488">Methylation</keyword>
<keyword id="KW-0544">Nucleosome core</keyword>
<keyword id="KW-0539">Nucleus</keyword>
<keyword id="KW-0564">Palmitate</keyword>
<keyword id="KW-0597">Phosphoprotein</keyword>
<keyword id="KW-1185">Reference proteome</keyword>
<keyword id="KW-0832">Ubl conjugation</keyword>
<comment type="function">
    <text>Core component of nucleosome. Nucleosomes wrap and compact DNA into chromatin, limiting DNA accessibility to the cellular machineries which require DNA as a template. Histones thereby play a central role in transcription regulation, DNA repair, DNA replication and chromosomal stability. DNA accessibility is regulated via a complex set of post-translational modifications of histones, also called histone code, and nucleosome remodeling.</text>
</comment>
<comment type="subunit">
    <text evidence="10">The nucleosome is a histone octamer containing two molecules each of H2A, H2B, H3 and H4 assembled in one H3-H4 heterotetramer and two H2A-H2B heterodimers. The octamer wraps approximately 147 bp of DNA.</text>
</comment>
<comment type="interaction">
    <interactant intactId="EBI-350041">
        <id>P84233</id>
    </interactant>
    <interactant intactId="EBI-302085">
        <id>P62799</id>
    </interactant>
    <organismsDiffer>false</organismsDiffer>
    <experiments>2</experiments>
</comment>
<comment type="subcellular location">
    <subcellularLocation>
        <location>Nucleus</location>
    </subcellularLocation>
    <subcellularLocation>
        <location>Chromosome</location>
    </subcellularLocation>
</comment>
<comment type="developmental stage">
    <text>Expressed during S phase, then expression strongly decreases as cell division slows down during the process of differentiation.</text>
</comment>
<comment type="PTM">
    <text evidence="8">Acetylation is generally linked to gene activation. Acetylation on Lys-19 (H3K18ac) and Lys-24 (H3K24ac) favors methylation at Arg-18 (H3R17me). Acetylation at Lys-123 (H3K122ac) by EP300/p300 plays a central role in chromatin structure: localizes at the surface of the histone octamer and stimulates transcription, possibly by promoting nucleosome instability (By similarity).</text>
</comment>
<comment type="PTM">
    <text evidence="8">Asymmetric dimethylation at Arg-18 (H3R17me2a) is linked to gene activation. Asymmetric dimethylation at Arg-3 (H3R2me2a) by prmt6 is linked to gene repression and is mutually exclusive with H3 Lys-5 methylation (H3K4me2 and H3K4me3). H3R2me2a is present at the 3' of genes regardless of their transcription state and is enriched on inactive promoters, while it is absent on active promoters (By similarity).</text>
</comment>
<comment type="PTM">
    <text evidence="8">Methylation at Lys-5 (H3K4me), Lys-37 (H3K36me) and Lys-80 (H3K79me) are linked to gene activation. Methylation at Lys-5 (H3K4me) facilitates subsequent acetylation of H3 and H4. Methylation at Lys-80 (H3K79me) is associated with DNA double-strand break (DSB) responses and is a specific target for tp53bp1. Methylation at Lys-10 (H3K9me) and Lys-28 (H3K27me) are linked to gene repression. Methylation at Lys-10 (H3K9me) is a specific target for HP1 proteins (cbx1, cbx3 and cbx5) and prevents subsequent phosphorylation at Ser-11 (H3S10ph) and acetylation of H3 and H4. Methylation at Lys-5 (H3K4me) and Lys-80 (H3K79me) require preliminary monoubiquitination of H2B at 'Lys-120' (By similarity).</text>
</comment>
<comment type="PTM">
    <text evidence="8">Phosphorylated at Thr-4 (H3T3ph) by VRK1 (By similarity). Phosphorylated at Thr-4 (H3T3ph) by HASPIN during prophase and dephosphorylated during anaphase. Phosphorylation at Ser-11 (H3S10ph) by aurkb is crucial for chromosome condensation and cell-cycle progression during mitosis and meiosis. In addition phosphorylation at Ser-11 (H3S10ph) by rps6ka4 and rps6ka5 is important during interphase because it enables the transcription of genes following external stimulation, like mitogens, stress, growth factors or UV irradiation and result in the activation of genes, such as c-fos and c-jun. Phosphorylation at Ser-11 (H3S10ph), which is linked to gene activation, prevents methylation at Lys-10 (H3K9me) but facilitates acetylation of H3 and H4. Phosphorylation at Ser-11 (H3S10ph) by aurkb mediates the dissociation of HP1 proteins (cbx1, cbx3 and cbx5) from heterochromatin. Phosphorylation at Ser-11 (H3S10ph) is also an essential regulatory mechanism for neoplastic cell transformation. Phosphorylated at Ser-29 (H3S28ph) by map3k20 isoform 1, rps6ka5 or aurkb during mitosis or upon ultraviolet B irradiation. Phosphorylation at Thr-7 (H3T6ph) by prkcb is a specific tag for epigenetic transcriptional activation that prevents demethylation of Lys-5 (H3K4me) by lsd1/kdm1a. At centromeres, specifically phosphorylated at Thr-12 (H3T11ph) from prophase to early anaphase, by DAPK3 and PKN1. Phosphorylation at Thr-12 (H3T11ph) by PKN1 or isoform M2 of PKM (PKM2) is a specific tag for epigenetic transcriptional activation that promotes demethylation of Lys-10 (H3K9me) by kdm4c/jmjd2c. Phosphorylation at Tyr-42 (H3Y41ph) by jak2 promotes exclusion of cbx5 (HP1 alpha) from chromatin (By similarity).</text>
</comment>
<comment type="PTM">
    <text evidence="8">Monoubiquitinated by rag1 in lymphoid cells, monoubiquitination is required for V(D)J recombination.</text>
</comment>
<comment type="PTM">
    <text evidence="8">Lysine deamination at Lys-5 (H3K4all) to form allysine only takes place on H3K4me3 and results in gene repression.</text>
</comment>
<comment type="PTM">
    <text evidence="3">Butyrylation of histones marks active promoters and competes with histone acetylation. It is present during late spermatogenesis.</text>
</comment>
<comment type="PTM">
    <text evidence="8">Succinylation at Lys-80 (H3K79succ) by KAT2A takes place with a maximum frequency around the transcription start sites of genes. It gives a specific tag for epigenetic transcription activation. Desuccinylation at Lys-123 (H3K122succ) by SIRT7 in response to DNA damage promotes chromatin condensation and double-strand breaks (DSBs) repair.</text>
</comment>
<comment type="PTM">
    <text evidence="2">Serine ADP-ribosylation by PARP1 or PARP2 constitutes the primary form of ADP-ribosylation of proteins in response to DNA damage. Serine ADP-ribosylation at Ser-11 (H3S10ADPr) promotes recruitment of CHD1L. H3S10ADPr is mutually exclusive with phosphorylation at Ser-11 (H3S10ph) and impairs acetylation at Lys-10 (H3K9ac).</text>
</comment>
<comment type="PTM">
    <text evidence="8">Serotonylated by TGM2 at Gln-6 (H3Q5ser) during serotonergic neuron differentiation (By similarity). H3Q5ser is associated with trimethylation of Lys-5 (H3K4me3) and enhances general transcription factor IID (TFIID) complex-binding to H3K4me3, thereby facilitating transcription (By similarity).</text>
</comment>
<comment type="PTM">
    <text evidence="7 8">Dopaminylated by TGM2 at Gln-6 (H3Q5dop) in ventral tegmental area (VTA) neurons (By similarity). H3Q5dop mediates neurotransmission-independent role of nuclear dopamine by regulating relapse-related transcriptional plasticity in the reward system (By similarity).</text>
</comment>
<comment type="PTM">
    <text evidence="8">Lactylated in macrophages by EP300/P300 by using lactoyl-CoA directly derived from endogenous or exogenous lactate, leading to stimulates gene transcription.</text>
</comment>
<comment type="similarity">
    <text evidence="12">Belongs to the histone H3 family.</text>
</comment>
<dbReference type="EMBL" id="X03104">
    <property type="protein sequence ID" value="CAA26890.1"/>
    <property type="molecule type" value="Genomic_DNA"/>
</dbReference>
<dbReference type="EMBL" id="X03017">
    <property type="protein sequence ID" value="CAA26813.1"/>
    <property type="molecule type" value="Genomic_DNA"/>
</dbReference>
<dbReference type="EMBL" id="X03018">
    <property type="protein sequence ID" value="CAA26818.1"/>
    <property type="molecule type" value="Genomic_DNA"/>
</dbReference>
<dbReference type="EMBL" id="M21286">
    <property type="protein sequence ID" value="AAA49765.1"/>
    <property type="molecule type" value="Genomic_DNA"/>
</dbReference>
<dbReference type="EMBL" id="M21287">
    <property type="protein sequence ID" value="AAA49770.1"/>
    <property type="molecule type" value="Genomic_DNA"/>
</dbReference>
<dbReference type="EMBL" id="BC133776">
    <property type="protein sequence ID" value="AAI33777.1"/>
    <property type="molecule type" value="mRNA"/>
</dbReference>
<dbReference type="PIR" id="A93596">
    <property type="entry name" value="HSXL31"/>
</dbReference>
<dbReference type="PIR" id="I51448">
    <property type="entry name" value="I51448"/>
</dbReference>
<dbReference type="RefSeq" id="NP_001091428.1">
    <property type="nucleotide sequence ID" value="NM_001097959.1"/>
</dbReference>
<dbReference type="RefSeq" id="XP_018079657.1">
    <property type="nucleotide sequence ID" value="XM_018224168.2"/>
</dbReference>
<dbReference type="RefSeq" id="XP_018096294.1">
    <property type="nucleotide sequence ID" value="XM_018240805.1"/>
</dbReference>
<dbReference type="RefSeq" id="XP_018096295.1">
    <property type="nucleotide sequence ID" value="XM_018240806.1"/>
</dbReference>
<dbReference type="RefSeq" id="XP_018096296.1">
    <property type="nucleotide sequence ID" value="XM_018240807.2"/>
</dbReference>
<dbReference type="RefSeq" id="XP_018098036.1">
    <property type="nucleotide sequence ID" value="XM_018242547.2"/>
</dbReference>
<dbReference type="RefSeq" id="XP_018118226.1">
    <property type="nucleotide sequence ID" value="XM_018262737.2"/>
</dbReference>
<dbReference type="RefSeq" id="XP_018118227.1">
    <property type="nucleotide sequence ID" value="XM_018262738.2"/>
</dbReference>
<dbReference type="RefSeq" id="XP_041418540.1">
    <property type="nucleotide sequence ID" value="XM_041562606.1"/>
</dbReference>
<dbReference type="RefSeq" id="XP_041420127.1">
    <property type="nucleotide sequence ID" value="XM_041564193.1"/>
</dbReference>
<dbReference type="RefSeq" id="XP_041432548.1">
    <property type="nucleotide sequence ID" value="XM_041576614.1"/>
</dbReference>
<dbReference type="RefSeq" id="XP_041432550.1">
    <property type="nucleotide sequence ID" value="XM_041576616.1"/>
</dbReference>
<dbReference type="RefSeq" id="XP_041434997.1">
    <property type="nucleotide sequence ID" value="XM_041579063.1"/>
</dbReference>
<dbReference type="RefSeq" id="XP_041434998.1">
    <property type="nucleotide sequence ID" value="XM_041579064.1"/>
</dbReference>
<dbReference type="RefSeq" id="XP_041434999.1">
    <property type="nucleotide sequence ID" value="XM_041579065.1"/>
</dbReference>
<dbReference type="RefSeq" id="XP_041444756.1">
    <property type="nucleotide sequence ID" value="XM_041588822.1"/>
</dbReference>
<dbReference type="PDB" id="1F66">
    <property type="method" value="X-ray"/>
    <property type="resolution" value="2.60 A"/>
    <property type="chains" value="A/E=1-136"/>
</dbReference>
<dbReference type="PDB" id="1KX3">
    <property type="method" value="X-ray"/>
    <property type="resolution" value="2.00 A"/>
    <property type="chains" value="A/E=2-136"/>
</dbReference>
<dbReference type="PDB" id="1KX4">
    <property type="method" value="X-ray"/>
    <property type="resolution" value="2.60 A"/>
    <property type="chains" value="A/E=2-136"/>
</dbReference>
<dbReference type="PDB" id="1KX5">
    <property type="method" value="X-ray"/>
    <property type="resolution" value="1.94 A"/>
    <property type="chains" value="A/E=2-136"/>
</dbReference>
<dbReference type="PDB" id="1P34">
    <property type="method" value="X-ray"/>
    <property type="resolution" value="2.70 A"/>
    <property type="chains" value="A/E=2-136"/>
</dbReference>
<dbReference type="PDB" id="1P3A">
    <property type="method" value="X-ray"/>
    <property type="resolution" value="3.00 A"/>
    <property type="chains" value="A/E=2-136"/>
</dbReference>
<dbReference type="PDB" id="1P3B">
    <property type="method" value="X-ray"/>
    <property type="resolution" value="3.00 A"/>
    <property type="chains" value="A/E=2-136"/>
</dbReference>
<dbReference type="PDB" id="1P3F">
    <property type="method" value="X-ray"/>
    <property type="resolution" value="2.90 A"/>
    <property type="chains" value="A/E=2-136"/>
</dbReference>
<dbReference type="PDB" id="1P3G">
    <property type="method" value="X-ray"/>
    <property type="resolution" value="2.70 A"/>
    <property type="chains" value="A/E=2-136"/>
</dbReference>
<dbReference type="PDB" id="1P3I">
    <property type="method" value="X-ray"/>
    <property type="resolution" value="2.30 A"/>
    <property type="chains" value="A/E=2-136"/>
</dbReference>
<dbReference type="PDB" id="1P3K">
    <property type="method" value="X-ray"/>
    <property type="resolution" value="2.90 A"/>
    <property type="chains" value="A/E=2-136"/>
</dbReference>
<dbReference type="PDB" id="1P3L">
    <property type="method" value="X-ray"/>
    <property type="resolution" value="2.40 A"/>
    <property type="chains" value="A/E=2-136"/>
</dbReference>
<dbReference type="PDB" id="1P3M">
    <property type="method" value="X-ray"/>
    <property type="resolution" value="2.90 A"/>
    <property type="chains" value="A/E=2-136"/>
</dbReference>
<dbReference type="PDB" id="1P3O">
    <property type="method" value="X-ray"/>
    <property type="resolution" value="2.75 A"/>
    <property type="chains" value="A/E=2-136"/>
</dbReference>
<dbReference type="PDB" id="1P3P">
    <property type="method" value="X-ray"/>
    <property type="resolution" value="2.70 A"/>
    <property type="chains" value="A/E=2-136"/>
</dbReference>
<dbReference type="PDB" id="1S32">
    <property type="method" value="X-ray"/>
    <property type="resolution" value="2.05 A"/>
    <property type="chains" value="A/E=2-136"/>
</dbReference>
<dbReference type="PDB" id="1ZBB">
    <property type="method" value="X-ray"/>
    <property type="resolution" value="9.00 A"/>
    <property type="chains" value="A/E/a/e=2-136"/>
</dbReference>
<dbReference type="PDB" id="1ZLA">
    <property type="method" value="X-ray"/>
    <property type="resolution" value="2.90 A"/>
    <property type="chains" value="A/E=2-136"/>
</dbReference>
<dbReference type="PDB" id="2F8N">
    <property type="method" value="X-ray"/>
    <property type="resolution" value="2.90 A"/>
    <property type="chains" value="A/E=1-136"/>
</dbReference>
<dbReference type="PDB" id="2FJ7">
    <property type="method" value="X-ray"/>
    <property type="resolution" value="3.20 A"/>
    <property type="chains" value="A/E=2-136"/>
</dbReference>
<dbReference type="PDB" id="2HUE">
    <property type="method" value="X-ray"/>
    <property type="resolution" value="1.70 A"/>
    <property type="chains" value="B=62-136"/>
</dbReference>
<dbReference type="PDB" id="2IO5">
    <property type="method" value="X-ray"/>
    <property type="resolution" value="2.70 A"/>
    <property type="chains" value="B=2-136"/>
</dbReference>
<dbReference type="PDB" id="2L11">
    <property type="method" value="NMR"/>
    <property type="chains" value="B=2-16"/>
</dbReference>
<dbReference type="PDB" id="2L12">
    <property type="method" value="NMR"/>
    <property type="chains" value="B=2-16"/>
</dbReference>
<dbReference type="PDB" id="2NZD">
    <property type="method" value="X-ray"/>
    <property type="resolution" value="2.65 A"/>
    <property type="chains" value="A/E=2-136"/>
</dbReference>
<dbReference type="PDB" id="3B6F">
    <property type="method" value="X-ray"/>
    <property type="resolution" value="3.45 A"/>
    <property type="chains" value="A/E=2-136"/>
</dbReference>
<dbReference type="PDB" id="3B6G">
    <property type="method" value="X-ray"/>
    <property type="resolution" value="3.45 A"/>
    <property type="chains" value="A/E=2-136"/>
</dbReference>
<dbReference type="PDB" id="3C1B">
    <property type="method" value="X-ray"/>
    <property type="resolution" value="2.20 A"/>
    <property type="chains" value="A/E=2-136"/>
</dbReference>
<dbReference type="PDB" id="3C1C">
    <property type="method" value="X-ray"/>
    <property type="resolution" value="3.15 A"/>
    <property type="chains" value="A/E=2-136"/>
</dbReference>
<dbReference type="PDB" id="3GV6">
    <property type="method" value="X-ray"/>
    <property type="resolution" value="1.76 A"/>
    <property type="chains" value="B=2-16"/>
</dbReference>
<dbReference type="PDB" id="3KUY">
    <property type="method" value="X-ray"/>
    <property type="resolution" value="2.90 A"/>
    <property type="chains" value="A/E=2-136"/>
</dbReference>
<dbReference type="PDB" id="3KWQ">
    <property type="method" value="X-ray"/>
    <property type="resolution" value="3.50 A"/>
    <property type="chains" value="A/E=39-136"/>
</dbReference>
<dbReference type="PDB" id="3KXB">
    <property type="method" value="X-ray"/>
    <property type="resolution" value="3.20 A"/>
    <property type="chains" value="A/E=2-136"/>
</dbReference>
<dbReference type="PDB" id="3LEL">
    <property type="method" value="X-ray"/>
    <property type="resolution" value="2.95 A"/>
    <property type="chains" value="A/E/K/O=1-136"/>
</dbReference>
<dbReference type="PDB" id="3LJA">
    <property type="method" value="X-ray"/>
    <property type="resolution" value="2.75 A"/>
    <property type="chains" value="A/E=2-136"/>
</dbReference>
<dbReference type="PDB" id="3LZ0">
    <property type="method" value="X-ray"/>
    <property type="resolution" value="2.50 A"/>
    <property type="chains" value="A/E=2-136"/>
</dbReference>
<dbReference type="PDB" id="3LZ1">
    <property type="method" value="X-ray"/>
    <property type="resolution" value="2.50 A"/>
    <property type="chains" value="A/E=2-136"/>
</dbReference>
<dbReference type="PDB" id="3MGP">
    <property type="method" value="X-ray"/>
    <property type="resolution" value="2.44 A"/>
    <property type="chains" value="A/E=2-136"/>
</dbReference>
<dbReference type="PDB" id="3MGQ">
    <property type="method" value="X-ray"/>
    <property type="resolution" value="2.65 A"/>
    <property type="chains" value="A/E=2-136"/>
</dbReference>
<dbReference type="PDB" id="3MGR">
    <property type="method" value="X-ray"/>
    <property type="resolution" value="2.30 A"/>
    <property type="chains" value="A/E=2-136"/>
</dbReference>
<dbReference type="PDB" id="3MGS">
    <property type="method" value="X-ray"/>
    <property type="resolution" value="3.15 A"/>
    <property type="chains" value="A/E=2-136"/>
</dbReference>
<dbReference type="PDB" id="3MNN">
    <property type="method" value="X-ray"/>
    <property type="resolution" value="2.50 A"/>
    <property type="chains" value="A/E=2-136"/>
</dbReference>
<dbReference type="PDB" id="3MVD">
    <property type="method" value="X-ray"/>
    <property type="resolution" value="2.90 A"/>
    <property type="chains" value="A/E=2-136"/>
</dbReference>
<dbReference type="PDB" id="3O62">
    <property type="method" value="X-ray"/>
    <property type="resolution" value="3.22 A"/>
    <property type="chains" value="A/E=2-136"/>
</dbReference>
<dbReference type="PDB" id="3REH">
    <property type="method" value="X-ray"/>
    <property type="resolution" value="2.50 A"/>
    <property type="chains" value="A/E=2-136"/>
</dbReference>
<dbReference type="PDB" id="3REI">
    <property type="method" value="X-ray"/>
    <property type="resolution" value="2.65 A"/>
    <property type="chains" value="A/E=2-136"/>
</dbReference>
<dbReference type="PDB" id="3REJ">
    <property type="method" value="X-ray"/>
    <property type="resolution" value="2.55 A"/>
    <property type="chains" value="A/E=2-136"/>
</dbReference>
<dbReference type="PDB" id="3REK">
    <property type="method" value="X-ray"/>
    <property type="resolution" value="2.60 A"/>
    <property type="chains" value="A/E=2-136"/>
</dbReference>
<dbReference type="PDB" id="3REL">
    <property type="method" value="X-ray"/>
    <property type="resolution" value="2.70 A"/>
    <property type="chains" value="A/E=2-136"/>
</dbReference>
<dbReference type="PDB" id="3TU4">
    <property type="method" value="X-ray"/>
    <property type="resolution" value="3.00 A"/>
    <property type="chains" value="A/E=2-136"/>
</dbReference>
<dbReference type="PDB" id="3UT9">
    <property type="method" value="X-ray"/>
    <property type="resolution" value="2.20 A"/>
    <property type="chains" value="A/E=2-136"/>
</dbReference>
<dbReference type="PDB" id="3UTA">
    <property type="method" value="X-ray"/>
    <property type="resolution" value="2.07 A"/>
    <property type="chains" value="A/E=2-136"/>
</dbReference>
<dbReference type="PDB" id="3UTB">
    <property type="method" value="X-ray"/>
    <property type="resolution" value="2.20 A"/>
    <property type="chains" value="A/E=2-136"/>
</dbReference>
<dbReference type="PDB" id="4EO5">
    <property type="method" value="X-ray"/>
    <property type="resolution" value="2.35 A"/>
    <property type="chains" value="B=62-136"/>
</dbReference>
<dbReference type="PDB" id="4J8U">
    <property type="method" value="X-ray"/>
    <property type="resolution" value="2.38 A"/>
    <property type="chains" value="A/E=2-136"/>
</dbReference>
<dbReference type="PDB" id="4J8V">
    <property type="method" value="X-ray"/>
    <property type="resolution" value="2.58 A"/>
    <property type="chains" value="A/E=2-136"/>
</dbReference>
<dbReference type="PDB" id="4J8W">
    <property type="method" value="X-ray"/>
    <property type="resolution" value="2.41 A"/>
    <property type="chains" value="A/E=2-136"/>
</dbReference>
<dbReference type="PDB" id="4J8X">
    <property type="method" value="X-ray"/>
    <property type="resolution" value="2.87 A"/>
    <property type="chains" value="A/E=2-136"/>
</dbReference>
<dbReference type="PDB" id="4KGC">
    <property type="method" value="X-ray"/>
    <property type="resolution" value="2.69 A"/>
    <property type="chains" value="A/E=1-136"/>
</dbReference>
<dbReference type="PDB" id="4LD9">
    <property type="method" value="X-ray"/>
    <property type="resolution" value="3.31 A"/>
    <property type="chains" value="A/E=1-136"/>
</dbReference>
<dbReference type="PDB" id="4QEO">
    <property type="method" value="X-ray"/>
    <property type="resolution" value="2.00 A"/>
    <property type="chains" value="P=2-16"/>
</dbReference>
<dbReference type="PDB" id="4R8P">
    <property type="method" value="X-ray"/>
    <property type="resolution" value="3.28 A"/>
    <property type="chains" value="A/E=2-136"/>
</dbReference>
<dbReference type="PDB" id="4WU8">
    <property type="method" value="X-ray"/>
    <property type="resolution" value="2.45 A"/>
    <property type="chains" value="A/E=2-136"/>
</dbReference>
<dbReference type="PDB" id="4WU9">
    <property type="method" value="X-ray"/>
    <property type="resolution" value="2.60 A"/>
    <property type="chains" value="A/E=2-136"/>
</dbReference>
<dbReference type="PDB" id="4XUJ">
    <property type="method" value="X-ray"/>
    <property type="resolution" value="3.18 A"/>
    <property type="chains" value="A/E=2-136"/>
</dbReference>
<dbReference type="PDB" id="4XZQ">
    <property type="method" value="X-ray"/>
    <property type="resolution" value="2.40 A"/>
    <property type="chains" value="A/E=39-136"/>
</dbReference>
<dbReference type="PDB" id="4YS3">
    <property type="method" value="X-ray"/>
    <property type="resolution" value="3.00 A"/>
    <property type="chains" value="A/E=39-136"/>
</dbReference>
<dbReference type="PDB" id="4Z66">
    <property type="method" value="X-ray"/>
    <property type="resolution" value="2.50 A"/>
    <property type="chains" value="A/E=39-136"/>
</dbReference>
<dbReference type="PDB" id="4ZUX">
    <property type="method" value="X-ray"/>
    <property type="resolution" value="3.82 A"/>
    <property type="chains" value="A/E/K/O=1-136"/>
</dbReference>
<dbReference type="PDB" id="5BS7">
    <property type="method" value="X-ray"/>
    <property type="resolution" value="3.30 A"/>
    <property type="chains" value="A/B=26-136"/>
</dbReference>
<dbReference type="PDB" id="5BSA">
    <property type="method" value="X-ray"/>
    <property type="resolution" value="4.61 A"/>
    <property type="chains" value="A/B=27-136"/>
</dbReference>
<dbReference type="PDB" id="5CP6">
    <property type="method" value="X-ray"/>
    <property type="resolution" value="2.60 A"/>
    <property type="chains" value="A/E=2-136"/>
</dbReference>
<dbReference type="PDB" id="5DNM">
    <property type="method" value="X-ray"/>
    <property type="resolution" value="2.81 A"/>
    <property type="chains" value="A/E=2-136"/>
</dbReference>
<dbReference type="PDB" id="5DNN">
    <property type="method" value="X-ray"/>
    <property type="resolution" value="2.80 A"/>
    <property type="chains" value="A/E=2-136"/>
</dbReference>
<dbReference type="PDB" id="5E5A">
    <property type="method" value="X-ray"/>
    <property type="resolution" value="2.81 A"/>
    <property type="chains" value="A/E=1-136"/>
</dbReference>
<dbReference type="PDB" id="5F99">
    <property type="method" value="X-ray"/>
    <property type="resolution" value="2.63 A"/>
    <property type="chains" value="A/E=2-136"/>
</dbReference>
<dbReference type="PDB" id="5HQ2">
    <property type="method" value="X-ray"/>
    <property type="resolution" value="4.50 A"/>
    <property type="chains" value="A=2-136"/>
</dbReference>
<dbReference type="PDB" id="5KGF">
    <property type="method" value="EM"/>
    <property type="resolution" value="4.54 A"/>
    <property type="chains" value="A/E=1-136"/>
</dbReference>
<dbReference type="PDB" id="5MLU">
    <property type="method" value="X-ray"/>
    <property type="resolution" value="2.80 A"/>
    <property type="chains" value="A/E=40-136"/>
</dbReference>
<dbReference type="PDB" id="5NL0">
    <property type="method" value="X-ray"/>
    <property type="resolution" value="5.40 A"/>
    <property type="chains" value="A/E/K=2-136"/>
</dbReference>
<dbReference type="PDB" id="5O9G">
    <property type="method" value="EM"/>
    <property type="resolution" value="4.80 A"/>
    <property type="chains" value="A/E=1-136"/>
</dbReference>
<dbReference type="PDB" id="5OMX">
    <property type="method" value="X-ray"/>
    <property type="resolution" value="2.32 A"/>
    <property type="chains" value="A/E=2-136"/>
</dbReference>
<dbReference type="PDB" id="5ONG">
    <property type="method" value="X-ray"/>
    <property type="resolution" value="2.80 A"/>
    <property type="chains" value="A/E=2-136"/>
</dbReference>
<dbReference type="PDB" id="5ONW">
    <property type="method" value="X-ray"/>
    <property type="resolution" value="2.80 A"/>
    <property type="chains" value="A/E=2-136"/>
</dbReference>
<dbReference type="PDB" id="5OXV">
    <property type="method" value="X-ray"/>
    <property type="resolution" value="6.72 A"/>
    <property type="chains" value="A/E/K/O=2-136"/>
</dbReference>
<dbReference type="PDB" id="5OY7">
    <property type="method" value="X-ray"/>
    <property type="resolution" value="5.77 A"/>
    <property type="chains" value="A/E/I/M/Q/U/Y/c=2-136"/>
</dbReference>
<dbReference type="PDB" id="5X0X">
    <property type="method" value="EM"/>
    <property type="resolution" value="3.97 A"/>
    <property type="chains" value="A/E=1-136"/>
</dbReference>
<dbReference type="PDB" id="5X0Y">
    <property type="method" value="EM"/>
    <property type="resolution" value="3.97 A"/>
    <property type="chains" value="A/E=2-136"/>
</dbReference>
<dbReference type="PDB" id="5XBK">
    <property type="method" value="X-ray"/>
    <property type="resolution" value="3.22 A"/>
    <property type="chains" value="E=2-19"/>
</dbReference>
<dbReference type="PDB" id="5XF6">
    <property type="method" value="X-ray"/>
    <property type="resolution" value="2.63 A"/>
    <property type="chains" value="A/E=2-136"/>
</dbReference>
<dbReference type="PDB" id="5Z3L">
    <property type="method" value="EM"/>
    <property type="resolution" value="4.31 A"/>
    <property type="chains" value="A/E=2-136"/>
</dbReference>
<dbReference type="PDB" id="5Z3O">
    <property type="method" value="EM"/>
    <property type="resolution" value="3.62 A"/>
    <property type="chains" value="A/E=2-136"/>
</dbReference>
<dbReference type="PDB" id="5Z3U">
    <property type="method" value="EM"/>
    <property type="resolution" value="4.31 A"/>
    <property type="chains" value="A/E=2-136"/>
</dbReference>
<dbReference type="PDB" id="5Z3V">
    <property type="method" value="EM"/>
    <property type="resolution" value="4.22 A"/>
    <property type="chains" value="A/E=2-136"/>
</dbReference>
<dbReference type="PDB" id="6ESF">
    <property type="method" value="EM"/>
    <property type="resolution" value="3.70 A"/>
    <property type="chains" value="A/E=2-136"/>
</dbReference>
<dbReference type="PDB" id="6ESG">
    <property type="method" value="EM"/>
    <property type="resolution" value="5.40 A"/>
    <property type="chains" value="A/E=2-136"/>
</dbReference>
<dbReference type="PDB" id="6ESH">
    <property type="method" value="EM"/>
    <property type="resolution" value="5.10 A"/>
    <property type="chains" value="A/E=2-136"/>
</dbReference>
<dbReference type="PDB" id="6ESI">
    <property type="method" value="EM"/>
    <property type="resolution" value="6.30 A"/>
    <property type="chains" value="A/E=2-136"/>
</dbReference>
<dbReference type="PDB" id="6FQ5">
    <property type="method" value="EM"/>
    <property type="resolution" value="3.80 A"/>
    <property type="chains" value="A/E=38-135"/>
</dbReference>
<dbReference type="PDB" id="6FQ6">
    <property type="method" value="EM"/>
    <property type="resolution" value="4.00 A"/>
    <property type="chains" value="A/E=38-135"/>
</dbReference>
<dbReference type="PDB" id="6I84">
    <property type="method" value="EM"/>
    <property type="resolution" value="4.40 A"/>
    <property type="chains" value="M/S=1-136"/>
</dbReference>
<dbReference type="PDB" id="6IRO">
    <property type="method" value="EM"/>
    <property type="resolution" value="3.40 A"/>
    <property type="chains" value="A/E=2-136"/>
</dbReference>
<dbReference type="PDB" id="6IY2">
    <property type="method" value="EM"/>
    <property type="resolution" value="3.47 A"/>
    <property type="chains" value="A/E=37-136"/>
</dbReference>
<dbReference type="PDB" id="6IY3">
    <property type="method" value="EM"/>
    <property type="resolution" value="3.67 A"/>
    <property type="chains" value="A/E=37-136"/>
</dbReference>
<dbReference type="PDB" id="6JM9">
    <property type="method" value="EM"/>
    <property type="resolution" value="7.30 A"/>
    <property type="chains" value="A/E=39-136"/>
</dbReference>
<dbReference type="PDB" id="6JMA">
    <property type="method" value="EM"/>
    <property type="resolution" value="6.80 A"/>
    <property type="chains" value="A/E=39-136"/>
</dbReference>
<dbReference type="PDB" id="6KIU">
    <property type="method" value="EM"/>
    <property type="resolution" value="3.20 A"/>
    <property type="chains" value="A/E=2-136"/>
</dbReference>
<dbReference type="PDB" id="6KIV">
    <property type="method" value="EM"/>
    <property type="resolution" value="4.00 A"/>
    <property type="chains" value="A/E=2-136"/>
</dbReference>
<dbReference type="PDB" id="6KIW">
    <property type="method" value="EM"/>
    <property type="resolution" value="4.00 A"/>
    <property type="chains" value="A/E=2-136"/>
</dbReference>
<dbReference type="PDB" id="6KIX">
    <property type="method" value="EM"/>
    <property type="resolution" value="4.10 A"/>
    <property type="chains" value="A/E=2-136"/>
</dbReference>
<dbReference type="PDB" id="6KIZ">
    <property type="method" value="EM"/>
    <property type="resolution" value="4.50 A"/>
    <property type="chains" value="A/E=2-136"/>
</dbReference>
<dbReference type="PDB" id="6KW3">
    <property type="method" value="EM"/>
    <property type="resolution" value="7.13 A"/>
    <property type="chains" value="N/Q=1-136"/>
</dbReference>
<dbReference type="PDB" id="6KW4">
    <property type="method" value="EM"/>
    <property type="resolution" value="7.55 A"/>
    <property type="chains" value="N/Q=1-136"/>
</dbReference>
<dbReference type="PDB" id="6KW5">
    <property type="method" value="EM"/>
    <property type="resolution" value="10.13 A"/>
    <property type="chains" value="R/V=1-136"/>
</dbReference>
<dbReference type="PDB" id="6NE3">
    <property type="method" value="EM"/>
    <property type="resolution" value="3.90 A"/>
    <property type="chains" value="A/E=1-136"/>
</dbReference>
<dbReference type="PDB" id="6NJ9">
    <property type="method" value="EM"/>
    <property type="resolution" value="2.96 A"/>
    <property type="chains" value="A/E=2-136"/>
</dbReference>
<dbReference type="PDB" id="6NN6">
    <property type="method" value="EM"/>
    <property type="resolution" value="3.90 A"/>
    <property type="chains" value="A/E=2-136"/>
</dbReference>
<dbReference type="PDB" id="6NOG">
    <property type="method" value="EM"/>
    <property type="resolution" value="3.90 A"/>
    <property type="chains" value="A/E=2-136"/>
</dbReference>
<dbReference type="PDB" id="6NQA">
    <property type="method" value="EM"/>
    <property type="resolution" value="3.54 A"/>
    <property type="chains" value="A/E=2-136"/>
</dbReference>
<dbReference type="PDB" id="6O22">
    <property type="method" value="Other"/>
    <property type="chains" value="E=1-136"/>
</dbReference>
<dbReference type="PDB" id="6O96">
    <property type="method" value="EM"/>
    <property type="resolution" value="3.50 A"/>
    <property type="chains" value="A/E=2-136"/>
</dbReference>
<dbReference type="PDB" id="6OM3">
    <property type="method" value="X-ray"/>
    <property type="resolution" value="3.30 A"/>
    <property type="chains" value="A/E/M/Q=2-136"/>
</dbReference>
<dbReference type="PDB" id="6PA7">
    <property type="method" value="EM"/>
    <property type="resolution" value="2.94 A"/>
    <property type="chains" value="A/E=2-136"/>
</dbReference>
<dbReference type="PDB" id="6PWV">
    <property type="method" value="EM"/>
    <property type="resolution" value="6.20 A"/>
    <property type="chains" value="G/K=1-136"/>
</dbReference>
<dbReference type="PDB" id="6PWW">
    <property type="method" value="EM"/>
    <property type="resolution" value="4.40 A"/>
    <property type="chains" value="G/K=1-136"/>
</dbReference>
<dbReference type="PDB" id="6PWX">
    <property type="method" value="EM"/>
    <property type="resolution" value="4.20 A"/>
    <property type="chains" value="G/K=1-136"/>
</dbReference>
<dbReference type="PDB" id="6R1T">
    <property type="method" value="EM"/>
    <property type="resolution" value="3.70 A"/>
    <property type="chains" value="A/E=38-136"/>
</dbReference>
<dbReference type="PDB" id="6R1U">
    <property type="method" value="EM"/>
    <property type="resolution" value="4.36 A"/>
    <property type="chains" value="A/E=2-136"/>
</dbReference>
<dbReference type="PDB" id="6R25">
    <property type="method" value="EM"/>
    <property type="resolution" value="4.61 A"/>
    <property type="chains" value="A/E/M=2-136"/>
</dbReference>
<dbReference type="PDB" id="6RYR">
    <property type="method" value="EM"/>
    <property type="resolution" value="3.10 A"/>
    <property type="chains" value="A/E=1-136"/>
</dbReference>
<dbReference type="PDB" id="6RYU">
    <property type="method" value="EM"/>
    <property type="resolution" value="4.00 A"/>
    <property type="chains" value="A/E=1-136"/>
</dbReference>
<dbReference type="PDB" id="6S01">
    <property type="method" value="EM"/>
    <property type="resolution" value="3.20 A"/>
    <property type="chains" value="A/E=2-136"/>
</dbReference>
<dbReference type="PDB" id="6T9L">
    <property type="method" value="EM"/>
    <property type="resolution" value="3.60 A"/>
    <property type="chains" value="A/E=2-136"/>
</dbReference>
<dbReference type="PDB" id="6TDA">
    <property type="method" value="EM"/>
    <property type="resolution" value="15.00 A"/>
    <property type="chains" value="A/E=2-136"/>
</dbReference>
<dbReference type="PDB" id="6UH5">
    <property type="method" value="EM"/>
    <property type="resolution" value="3.50 A"/>
    <property type="chains" value="R=2-9"/>
</dbReference>
<dbReference type="PDB" id="6UXW">
    <property type="method" value="EM"/>
    <property type="resolution" value="8.96 A"/>
    <property type="chains" value="R/V=2-136"/>
</dbReference>
<dbReference type="PDB" id="6VEN">
    <property type="method" value="EM"/>
    <property type="resolution" value="3.37 A"/>
    <property type="chains" value="A/E=2-136"/>
</dbReference>
<dbReference type="PDB" id="6VYP">
    <property type="method" value="X-ray"/>
    <property type="resolution" value="4.99 A"/>
    <property type="chains" value="A/E/a/e=2-136"/>
</dbReference>
<dbReference type="PDB" id="6W5I">
    <property type="method" value="EM"/>
    <property type="resolution" value="6.90 A"/>
    <property type="chains" value="G/K=1-136"/>
</dbReference>
<dbReference type="PDB" id="6W5M">
    <property type="method" value="EM"/>
    <property type="resolution" value="4.60 A"/>
    <property type="chains" value="G/K=1-136"/>
</dbReference>
<dbReference type="PDB" id="6W5N">
    <property type="method" value="EM"/>
    <property type="resolution" value="6.00 A"/>
    <property type="chains" value="G/K=1-136"/>
</dbReference>
<dbReference type="PDB" id="6WKR">
    <property type="method" value="EM"/>
    <property type="resolution" value="3.50 A"/>
    <property type="chains" value="I/O=1-136"/>
</dbReference>
<dbReference type="PDB" id="6WZ5">
    <property type="method" value="EM"/>
    <property type="resolution" value="2.20 A"/>
    <property type="chains" value="A/E=2-136"/>
</dbReference>
<dbReference type="PDB" id="6WZ9">
    <property type="method" value="EM"/>
    <property type="resolution" value="2.80 A"/>
    <property type="chains" value="A/E=2-136"/>
</dbReference>
<dbReference type="PDB" id="6X0N">
    <property type="method" value="EM"/>
    <property type="resolution" value="10.00 A"/>
    <property type="chains" value="A/E/a/e=2-136"/>
</dbReference>
<dbReference type="PDB" id="6Z6P">
    <property type="method" value="EM"/>
    <property type="resolution" value="4.43 A"/>
    <property type="chains" value="E=40-136"/>
</dbReference>
<dbReference type="PDB" id="6ZHX">
    <property type="method" value="EM"/>
    <property type="resolution" value="2.50 A"/>
    <property type="chains" value="A/E=1-136"/>
</dbReference>
<dbReference type="PDB" id="6ZHY">
    <property type="method" value="EM"/>
    <property type="resolution" value="3.00 A"/>
    <property type="chains" value="A/E=1-136"/>
</dbReference>
<dbReference type="PDB" id="7AT8">
    <property type="method" value="EM"/>
    <property type="resolution" value="4.40 A"/>
    <property type="chains" value="D/H=2-136"/>
</dbReference>
<dbReference type="PDB" id="7E8I">
    <property type="method" value="EM"/>
    <property type="resolution" value="3.10 A"/>
    <property type="chains" value="A/E=2-136"/>
</dbReference>
<dbReference type="PDB" id="7EA5">
    <property type="method" value="EM"/>
    <property type="resolution" value="3.30 A"/>
    <property type="chains" value="A/E=35-135"/>
</dbReference>
<dbReference type="PDB" id="7EG6">
    <property type="method" value="EM"/>
    <property type="resolution" value="3.10 A"/>
    <property type="chains" value="A/E=2-136"/>
</dbReference>
<dbReference type="PDB" id="7EGP">
    <property type="method" value="EM"/>
    <property type="resolution" value="6.90 A"/>
    <property type="chains" value="O/S=2-136"/>
</dbReference>
<dbReference type="PDB" id="7ENN">
    <property type="method" value="EM"/>
    <property type="resolution" value="2.80 A"/>
    <property type="chains" value="A/E=2-136"/>
</dbReference>
<dbReference type="PDB" id="7K6P">
    <property type="method" value="EM"/>
    <property type="resolution" value="3.20 A"/>
    <property type="chains" value="A/E=38-135"/>
</dbReference>
<dbReference type="PDB" id="7K6Q">
    <property type="method" value="EM"/>
    <property type="resolution" value="3.10 A"/>
    <property type="chains" value="A/E=38-135"/>
</dbReference>
<dbReference type="PDB" id="7KBD">
    <property type="method" value="EM"/>
    <property type="resolution" value="3.38 A"/>
    <property type="chains" value="A/E=1-136"/>
</dbReference>
<dbReference type="PDB" id="7KBE">
    <property type="method" value="EM"/>
    <property type="resolution" value="3.50 A"/>
    <property type="chains" value="A/E=1-136"/>
</dbReference>
<dbReference type="PDB" id="7KBF">
    <property type="method" value="EM"/>
    <property type="resolution" value="4.42 A"/>
    <property type="chains" value="A/E=1-136"/>
</dbReference>
<dbReference type="PDB" id="7KTQ">
    <property type="method" value="EM"/>
    <property type="resolution" value="3.30 A"/>
    <property type="chains" value="A/E=38-136"/>
</dbReference>
<dbReference type="PDB" id="7MBM">
    <property type="method" value="EM"/>
    <property type="chains" value="G/K=1-136"/>
</dbReference>
<dbReference type="PDB" id="7MBN">
    <property type="method" value="EM"/>
    <property type="chains" value="G/K=1-136"/>
</dbReference>
<dbReference type="PDB" id="7NKX">
    <property type="method" value="EM"/>
    <property type="resolution" value="2.90 A"/>
    <property type="chains" value="a/e=1-136"/>
</dbReference>
<dbReference type="PDB" id="7NKY">
    <property type="method" value="EM"/>
    <property type="resolution" value="3.20 A"/>
    <property type="chains" value="a/e=1-136"/>
</dbReference>
<dbReference type="PDB" id="7OH9">
    <property type="method" value="EM"/>
    <property type="resolution" value="3.00 A"/>
    <property type="chains" value="A/E=2-136"/>
</dbReference>
<dbReference type="PDB" id="7OHA">
    <property type="method" value="EM"/>
    <property type="resolution" value="2.90 A"/>
    <property type="chains" value="A/E=2-136"/>
</dbReference>
<dbReference type="PDB" id="7OHB">
    <property type="method" value="EM"/>
    <property type="resolution" value="3.40 A"/>
    <property type="chains" value="A/E=2-136"/>
</dbReference>
<dbReference type="PDB" id="7OHC">
    <property type="method" value="EM"/>
    <property type="resolution" value="2.50 A"/>
    <property type="chains" value="A/E=2-136"/>
</dbReference>
<dbReference type="PDB" id="7OTQ">
    <property type="method" value="EM"/>
    <property type="resolution" value="4.80 A"/>
    <property type="chains" value="A/E=1-136"/>
</dbReference>
<dbReference type="PDB" id="7SSA">
    <property type="method" value="EM"/>
    <property type="resolution" value="3.20 A"/>
    <property type="chains" value="A/E=2-136"/>
</dbReference>
<dbReference type="PDB" id="7SWY">
    <property type="method" value="EM"/>
    <property type="resolution" value="2.60 A"/>
    <property type="chains" value="A/E=2-136"/>
</dbReference>
<dbReference type="PDB" id="7TN2">
    <property type="method" value="EM"/>
    <property type="resolution" value="2.30 A"/>
    <property type="chains" value="A/E=2-136"/>
</dbReference>
<dbReference type="PDB" id="7UD5">
    <property type="method" value="EM"/>
    <property type="resolution" value="4.25 A"/>
    <property type="chains" value="A/E=1-136"/>
</dbReference>
<dbReference type="PDB" id="7UNC">
    <property type="method" value="EM"/>
    <property type="resolution" value="3.00 A"/>
    <property type="chains" value="a/e=1-136"/>
</dbReference>
<dbReference type="PDB" id="7UND">
    <property type="method" value="EM"/>
    <property type="resolution" value="3.00 A"/>
    <property type="chains" value="a/e=1-136"/>
</dbReference>
<dbReference type="PDB" id="7VDT">
    <property type="method" value="EM"/>
    <property type="resolution" value="2.80 A"/>
    <property type="chains" value="E/K=1-136"/>
</dbReference>
<dbReference type="PDB" id="7VDV">
    <property type="method" value="EM"/>
    <property type="resolution" value="3.40 A"/>
    <property type="chains" value="E/K=1-136"/>
</dbReference>
<dbReference type="PDB" id="7VVU">
    <property type="method" value="EM"/>
    <property type="resolution" value="3.40 A"/>
    <property type="chains" value="A/O=1-136"/>
</dbReference>
<dbReference type="PDB" id="7VVZ">
    <property type="method" value="EM"/>
    <property type="resolution" value="8.80 A"/>
    <property type="chains" value="A/O=1-136"/>
</dbReference>
<dbReference type="PDB" id="7X3T">
    <property type="method" value="EM"/>
    <property type="resolution" value="5.40 A"/>
    <property type="chains" value="A/E/K/O=1-136"/>
</dbReference>
<dbReference type="PDB" id="7X3V">
    <property type="method" value="EM"/>
    <property type="resolution" value="3.09 A"/>
    <property type="chains" value="A/E=1-136"/>
</dbReference>
<dbReference type="PDB" id="7X3W">
    <property type="method" value="EM"/>
    <property type="resolution" value="3.10 A"/>
    <property type="chains" value="A/E=1-136"/>
</dbReference>
<dbReference type="PDB" id="7X3X">
    <property type="method" value="EM"/>
    <property type="resolution" value="3.20 A"/>
    <property type="chains" value="A/E=1-136"/>
</dbReference>
<dbReference type="PDB" id="7XFC">
    <property type="method" value="EM"/>
    <property type="resolution" value="2.90 A"/>
    <property type="chains" value="A/E=1-136"/>
</dbReference>
<dbReference type="PDB" id="7XFH">
    <property type="method" value="EM"/>
    <property type="resolution" value="2.90 A"/>
    <property type="chains" value="A/E=1-136"/>
</dbReference>
<dbReference type="PDB" id="7XFI">
    <property type="method" value="EM"/>
    <property type="resolution" value="2.90 A"/>
    <property type="chains" value="A/E=1-136"/>
</dbReference>
<dbReference type="PDB" id="7XFJ">
    <property type="method" value="EM"/>
    <property type="resolution" value="3.00 A"/>
    <property type="chains" value="A/E=1-136"/>
</dbReference>
<dbReference type="PDB" id="7XFL">
    <property type="method" value="EM"/>
    <property type="resolution" value="2.80 A"/>
    <property type="chains" value="A/E=1-136"/>
</dbReference>
<dbReference type="PDB" id="7XFM">
    <property type="method" value="EM"/>
    <property type="resolution" value="3.10 A"/>
    <property type="chains" value="A/E=1-136"/>
</dbReference>
<dbReference type="PDB" id="7XFN">
    <property type="method" value="EM"/>
    <property type="resolution" value="2.80 A"/>
    <property type="chains" value="A/E=1-136"/>
</dbReference>
<dbReference type="PDB" id="7XNP">
    <property type="method" value="EM"/>
    <property type="resolution" value="2.90 A"/>
    <property type="chains" value="A/E=1-136"/>
</dbReference>
<dbReference type="PDB" id="7XPX">
    <property type="method" value="EM"/>
    <property type="resolution" value="3.20 A"/>
    <property type="chains" value="A/E=2-136"/>
</dbReference>
<dbReference type="PDB" id="7YI1">
    <property type="method" value="EM"/>
    <property type="resolution" value="2.80 A"/>
    <property type="chains" value="A/E=2-136"/>
</dbReference>
<dbReference type="PDB" id="7YI4">
    <property type="method" value="EM"/>
    <property type="resolution" value="3.96 A"/>
    <property type="chains" value="G/K=2-136"/>
</dbReference>
<dbReference type="PDB" id="7YI5">
    <property type="method" value="EM"/>
    <property type="resolution" value="3.96 A"/>
    <property type="chains" value="G/K=2-136"/>
</dbReference>
<dbReference type="PDB" id="7YRG">
    <property type="method" value="EM"/>
    <property type="resolution" value="4.20 A"/>
    <property type="chains" value="A/E=34-136"/>
</dbReference>
<dbReference type="PDB" id="7ZS9">
    <property type="method" value="EM"/>
    <property type="resolution" value="3.10 A"/>
    <property type="chains" value="a/e=2-136"/>
</dbReference>
<dbReference type="PDB" id="7ZSA">
    <property type="method" value="EM"/>
    <property type="resolution" value="4.00 A"/>
    <property type="chains" value="a/e=2-136"/>
</dbReference>
<dbReference type="PDB" id="7ZSB">
    <property type="method" value="EM"/>
    <property type="resolution" value="6.60 A"/>
    <property type="chains" value="a/e=2-136"/>
</dbReference>
<dbReference type="PDB" id="8A3Y">
    <property type="method" value="EM"/>
    <property type="resolution" value="3.30 A"/>
    <property type="chains" value="a/e=1-136"/>
</dbReference>
<dbReference type="PDB" id="8B0A">
    <property type="method" value="EM"/>
    <property type="resolution" value="3.00 A"/>
    <property type="chains" value="A/E=1-136"/>
</dbReference>
<dbReference type="PDB" id="8BVW">
    <property type="method" value="EM"/>
    <property type="resolution" value="4.00 A"/>
    <property type="chains" value="a/e=1-136"/>
</dbReference>
<dbReference type="PDB" id="8BYQ">
    <property type="method" value="EM"/>
    <property type="resolution" value="4.10 A"/>
    <property type="chains" value="a/e=1-136"/>
</dbReference>
<dbReference type="PDB" id="8BZ1">
    <property type="method" value="EM"/>
    <property type="resolution" value="3.80 A"/>
    <property type="chains" value="a/e=1-136"/>
</dbReference>
<dbReference type="PDB" id="8CBN">
    <property type="method" value="EM"/>
    <property type="resolution" value="3.34 A"/>
    <property type="chains" value="A/E=2-136"/>
</dbReference>
<dbReference type="PDB" id="8CBQ">
    <property type="method" value="EM"/>
    <property type="resolution" value="4.00 A"/>
    <property type="chains" value="A/E=2-136"/>
</dbReference>
<dbReference type="PDB" id="8CEO">
    <property type="method" value="EM"/>
    <property type="resolution" value="3.60 A"/>
    <property type="chains" value="r/v=2-136"/>
</dbReference>
<dbReference type="PDB" id="8CWW">
    <property type="method" value="EM"/>
    <property type="resolution" value="2.74 A"/>
    <property type="chains" value="A/E=2-136"/>
</dbReference>
<dbReference type="PDB" id="8CZE">
    <property type="method" value="EM"/>
    <property type="resolution" value="2.58 A"/>
    <property type="chains" value="A/E=2-136"/>
</dbReference>
<dbReference type="PDB" id="8ETT">
    <property type="method" value="EM"/>
    <property type="resolution" value="6.68 A"/>
    <property type="chains" value="A/E=1-136"/>
</dbReference>
<dbReference type="PDB" id="8ETV">
    <property type="method" value="EM"/>
    <property type="resolution" value="3.16 A"/>
    <property type="chains" value="E=39-136"/>
</dbReference>
<dbReference type="PDB" id="8EUE">
    <property type="method" value="EM"/>
    <property type="resolution" value="3.48 A"/>
    <property type="chains" value="A/E=37-136"/>
</dbReference>
<dbReference type="PDB" id="8EUJ">
    <property type="method" value="EM"/>
    <property type="resolution" value="3.36 A"/>
    <property type="chains" value="M/f=41-136"/>
</dbReference>
<dbReference type="PDB" id="8F86">
    <property type="method" value="EM"/>
    <property type="resolution" value="3.10 A"/>
    <property type="chains" value="A/E=2-136"/>
</dbReference>
<dbReference type="PDB" id="8G57">
    <property type="method" value="EM"/>
    <property type="resolution" value="3.07 A"/>
    <property type="chains" value="A/E=4-135"/>
</dbReference>
<dbReference type="PDB" id="8G6G">
    <property type="method" value="EM"/>
    <property type="resolution" value="2.93 A"/>
    <property type="chains" value="A/E=1-136"/>
</dbReference>
<dbReference type="PDB" id="8G6H">
    <property type="method" value="EM"/>
    <property type="resolution" value="3.06 A"/>
    <property type="chains" value="A/E=1-136"/>
</dbReference>
<dbReference type="PDB" id="8G6Q">
    <property type="method" value="EM"/>
    <property type="resolution" value="3.41 A"/>
    <property type="chains" value="A/E=1-136"/>
</dbReference>
<dbReference type="PDB" id="8G6S">
    <property type="method" value="EM"/>
    <property type="resolution" value="3.47 A"/>
    <property type="chains" value="A/E=1-136"/>
</dbReference>
<dbReference type="PDB" id="8G86">
    <property type="method" value="EM"/>
    <property type="resolution" value="2.30 A"/>
    <property type="chains" value="A/E=2-136"/>
</dbReference>
<dbReference type="PDB" id="8G88">
    <property type="method" value="EM"/>
    <property type="resolution" value="4.80 A"/>
    <property type="chains" value="A/E=2-136"/>
</dbReference>
<dbReference type="PDB" id="8G8B">
    <property type="method" value="EM"/>
    <property type="resolution" value="4.30 A"/>
    <property type="chains" value="A/E=2-136"/>
</dbReference>
<dbReference type="PDB" id="8G8G">
    <property type="method" value="EM"/>
    <property type="resolution" value="3.20 A"/>
    <property type="chains" value="A/E=2-136"/>
</dbReference>
<dbReference type="PDB" id="8GPN">
    <property type="method" value="EM"/>
    <property type="resolution" value="3.20 A"/>
    <property type="chains" value="A/E=1-136"/>
</dbReference>
<dbReference type="PDB" id="8HXX">
    <property type="method" value="EM"/>
    <property type="resolution" value="3.00 A"/>
    <property type="chains" value="E=2-136"/>
</dbReference>
<dbReference type="PDB" id="8HXY">
    <property type="method" value="EM"/>
    <property type="resolution" value="3.10 A"/>
    <property type="chains" value="A/E=2-136"/>
</dbReference>
<dbReference type="PDB" id="8HXZ">
    <property type="method" value="EM"/>
    <property type="resolution" value="3.40 A"/>
    <property type="chains" value="A/E=2-136"/>
</dbReference>
<dbReference type="PDB" id="8HY0">
    <property type="method" value="EM"/>
    <property type="resolution" value="3.10 A"/>
    <property type="chains" value="A/E=2-136"/>
</dbReference>
<dbReference type="PDB" id="8IHM">
    <property type="method" value="EM"/>
    <property type="resolution" value="3.58 A"/>
    <property type="chains" value="A/E=2-136"/>
</dbReference>
<dbReference type="PDB" id="8IHN">
    <property type="method" value="EM"/>
    <property type="resolution" value="3.37 A"/>
    <property type="chains" value="A=2-25"/>
</dbReference>
<dbReference type="PDB" id="8IHT">
    <property type="method" value="EM"/>
    <property type="resolution" value="3.72 A"/>
    <property type="chains" value="A/E=2-136"/>
</dbReference>
<dbReference type="PDB" id="8JHO">
    <property type="method" value="EM"/>
    <property type="resolution" value="7.60 A"/>
    <property type="chains" value="A/E/a/e=2-136"/>
</dbReference>
<dbReference type="PDB" id="8KD2">
    <property type="method" value="EM"/>
    <property type="resolution" value="3.02 A"/>
    <property type="chains" value="O/S=2-136"/>
</dbReference>
<dbReference type="PDB" id="8KD4">
    <property type="method" value="EM"/>
    <property type="resolution" value="2.93 A"/>
    <property type="chains" value="O/S=2-136"/>
</dbReference>
<dbReference type="PDB" id="8KD5">
    <property type="method" value="EM"/>
    <property type="resolution" value="2.90 A"/>
    <property type="chains" value="O/S=2-136"/>
</dbReference>
<dbReference type="PDB" id="8KD6">
    <property type="method" value="EM"/>
    <property type="resolution" value="3.07 A"/>
    <property type="chains" value="O/S=2-136"/>
</dbReference>
<dbReference type="PDB" id="8KD7">
    <property type="method" value="EM"/>
    <property type="resolution" value="3.09 A"/>
    <property type="chains" value="O/S=2-136"/>
</dbReference>
<dbReference type="PDB" id="8OF4">
    <property type="method" value="EM"/>
    <property type="resolution" value="2.94 A"/>
    <property type="chains" value="A/E=1-136"/>
</dbReference>
<dbReference type="PDB" id="8PC5">
    <property type="method" value="EM"/>
    <property type="resolution" value="3.02 A"/>
    <property type="chains" value="A/E=2-136"/>
</dbReference>
<dbReference type="PDB" id="8PC6">
    <property type="method" value="EM"/>
    <property type="resolution" value="3.04 A"/>
    <property type="chains" value="A/E=2-136"/>
</dbReference>
<dbReference type="PDB" id="8PEO">
    <property type="method" value="EM"/>
    <property type="resolution" value="2.69 A"/>
    <property type="chains" value="E=2-136"/>
</dbReference>
<dbReference type="PDB" id="8PEP">
    <property type="method" value="EM"/>
    <property type="resolution" value="3.33 A"/>
    <property type="chains" value="E=2-136"/>
</dbReference>
<dbReference type="PDB" id="8RUP">
    <property type="method" value="EM"/>
    <property type="resolution" value="2.42 A"/>
    <property type="chains" value="A=1-136"/>
</dbReference>
<dbReference type="PDB" id="8RUQ">
    <property type="method" value="EM"/>
    <property type="resolution" value="2.29 A"/>
    <property type="chains" value="A=2-136"/>
</dbReference>
<dbReference type="PDB" id="8SIY">
    <property type="method" value="EM"/>
    <property type="resolution" value="2.90 A"/>
    <property type="chains" value="C/G=2-136"/>
</dbReference>
<dbReference type="PDB" id="8SKZ">
    <property type="method" value="EM"/>
    <property type="resolution" value="3.50 A"/>
    <property type="chains" value="B/E=1-136"/>
</dbReference>
<dbReference type="PDB" id="8SVF">
    <property type="method" value="EM"/>
    <property type="resolution" value="3.20 A"/>
    <property type="chains" value="A/E=1-136"/>
</dbReference>
<dbReference type="PDB" id="8T3T">
    <property type="method" value="EM"/>
    <property type="resolution" value="3.21 A"/>
    <property type="chains" value="A/E=2-136"/>
</dbReference>
<dbReference type="PDB" id="8T3W">
    <property type="method" value="EM"/>
    <property type="resolution" value="3.25 A"/>
    <property type="chains" value="A/E=2-136"/>
</dbReference>
<dbReference type="PDB" id="8T3Y">
    <property type="method" value="EM"/>
    <property type="resolution" value="3.47 A"/>
    <property type="chains" value="A/E=2-136"/>
</dbReference>
<dbReference type="PDB" id="8T9F">
    <property type="method" value="EM"/>
    <property type="resolution" value="2.60 A"/>
    <property type="chains" value="A/E=2-136"/>
</dbReference>
<dbReference type="PDB" id="8T9G">
    <property type="method" value="EM"/>
    <property type="resolution" value="6.20 A"/>
    <property type="chains" value="A/W=1-136"/>
</dbReference>
<dbReference type="PDB" id="8T9H">
    <property type="method" value="EM"/>
    <property type="resolution" value="3.37 A"/>
    <property type="chains" value="A/E=2-136"/>
</dbReference>
<dbReference type="PDB" id="8TAS">
    <property type="method" value="EM"/>
    <property type="resolution" value="4.10 A"/>
    <property type="chains" value="I/W=1-136"/>
</dbReference>
<dbReference type="PDB" id="8TB9">
    <property type="method" value="EM"/>
    <property type="resolution" value="4.00 A"/>
    <property type="chains" value="I/W=1-136"/>
</dbReference>
<dbReference type="PDB" id="8THU">
    <property type="method" value="EM"/>
    <property type="resolution" value="3.10 A"/>
    <property type="chains" value="A/E=2-136"/>
</dbReference>
<dbReference type="PDB" id="8UW1">
    <property type="method" value="EM"/>
    <property type="resolution" value="2.88 A"/>
    <property type="chains" value="A/E=1-136"/>
</dbReference>
<dbReference type="PDB" id="8UXQ">
    <property type="method" value="EM"/>
    <property type="resolution" value="6.30 A"/>
    <property type="chains" value="E/K=2-136"/>
</dbReference>
<dbReference type="PDB" id="8V25">
    <property type="method" value="EM"/>
    <property type="resolution" value="3.32 A"/>
    <property type="chains" value="A/E=1-136"/>
</dbReference>
<dbReference type="PDB" id="8V26">
    <property type="method" value="EM"/>
    <property type="resolution" value="3.33 A"/>
    <property type="chains" value="A/E=1-136"/>
</dbReference>
<dbReference type="PDB" id="8V27">
    <property type="method" value="EM"/>
    <property type="resolution" value="3.34 A"/>
    <property type="chains" value="A/E=1-136"/>
</dbReference>
<dbReference type="PDB" id="8V28">
    <property type="method" value="EM"/>
    <property type="resolution" value="3.36 A"/>
    <property type="chains" value="A/E=1-136"/>
</dbReference>
<dbReference type="PDB" id="8V4Y">
    <property type="method" value="EM"/>
    <property type="resolution" value="2.80 A"/>
    <property type="chains" value="A/E=2-136"/>
</dbReference>
<dbReference type="PDB" id="8V6V">
    <property type="method" value="EM"/>
    <property type="resolution" value="2.80 A"/>
    <property type="chains" value="A/E=2-136"/>
</dbReference>
<dbReference type="PDB" id="8V7L">
    <property type="method" value="EM"/>
    <property type="resolution" value="2.90 A"/>
    <property type="chains" value="A/E=2-136"/>
</dbReference>
<dbReference type="PDB" id="8VX5">
    <property type="method" value="EM"/>
    <property type="resolution" value="3.30 A"/>
    <property type="chains" value="A/E=1-136"/>
</dbReference>
<dbReference type="PDB" id="8VX6">
    <property type="method" value="EM"/>
    <property type="resolution" value="3.20 A"/>
    <property type="chains" value="A/E=1-136"/>
</dbReference>
<dbReference type="PDB" id="9B2S">
    <property type="method" value="EM"/>
    <property type="resolution" value="3.01 A"/>
    <property type="chains" value="A/E=1-136"/>
</dbReference>
<dbReference type="PDB" id="9B2T">
    <property type="method" value="EM"/>
    <property type="resolution" value="2.99 A"/>
    <property type="chains" value="A/E=1-136"/>
</dbReference>
<dbReference type="PDB" id="9B2U">
    <property type="method" value="EM"/>
    <property type="resolution" value="3.64 A"/>
    <property type="chains" value="E=1-136"/>
</dbReference>
<dbReference type="PDB" id="9DBY">
    <property type="method" value="EM"/>
    <property type="resolution" value="2.80 A"/>
    <property type="chains" value="A/E=1-136"/>
</dbReference>
<dbReference type="PDB" id="9DDE">
    <property type="method" value="EM"/>
    <property type="resolution" value="3.20 A"/>
    <property type="chains" value="A/E=1-136"/>
</dbReference>
<dbReference type="PDB" id="9DG3">
    <property type="method" value="EM"/>
    <property type="resolution" value="3.46 A"/>
    <property type="chains" value="A/E=1-136"/>
</dbReference>
<dbReference type="PDB" id="9DGG">
    <property type="method" value="EM"/>
    <property type="resolution" value="2.98 A"/>
    <property type="chains" value="A/E=1-136"/>
</dbReference>
<dbReference type="PDB" id="9E1L">
    <property type="method" value="EM"/>
    <property type="resolution" value="3.15 A"/>
    <property type="chains" value="A/E=1-136"/>
</dbReference>
<dbReference type="PDB" id="9E1M">
    <property type="method" value="EM"/>
    <property type="resolution" value="3.25 A"/>
    <property type="chains" value="A/E=1-136"/>
</dbReference>
<dbReference type="PDB" id="9E1N">
    <property type="method" value="EM"/>
    <property type="resolution" value="3.40 A"/>
    <property type="chains" value="A/E=1-136"/>
</dbReference>
<dbReference type="PDB" id="9E1O">
    <property type="method" value="EM"/>
    <property type="resolution" value="3.30 A"/>
    <property type="chains" value="A/E=1-136"/>
</dbReference>
<dbReference type="PDB" id="9E1P">
    <property type="method" value="EM"/>
    <property type="resolution" value="3.25 A"/>
    <property type="chains" value="A/E=1-136"/>
</dbReference>
<dbReference type="PDB" id="9E1Q">
    <property type="method" value="EM"/>
    <property type="resolution" value="3.10 A"/>
    <property type="chains" value="A/E=1-136"/>
</dbReference>
<dbReference type="PDB" id="9E1R">
    <property type="method" value="EM"/>
    <property type="resolution" value="3.10 A"/>
    <property type="chains" value="A/E=1-136"/>
</dbReference>
<dbReference type="PDB" id="9E1U">
    <property type="method" value="EM"/>
    <property type="resolution" value="3.10 A"/>
    <property type="chains" value="A/E=1-136"/>
</dbReference>
<dbReference type="PDB" id="9E1V">
    <property type="method" value="EM"/>
    <property type="resolution" value="3.10 A"/>
    <property type="chains" value="A/E=1-136"/>
</dbReference>
<dbReference type="PDB" id="9E1W">
    <property type="method" value="EM"/>
    <property type="resolution" value="3.20 A"/>
    <property type="chains" value="A/E=1-136"/>
</dbReference>
<dbReference type="PDB" id="9E1X">
    <property type="method" value="EM"/>
    <property type="resolution" value="3.40 A"/>
    <property type="chains" value="A/E=1-136"/>
</dbReference>
<dbReference type="PDB" id="9E1Y">
    <property type="method" value="EM"/>
    <property type="resolution" value="2.60 A"/>
    <property type="chains" value="A/E=1-136"/>
</dbReference>
<dbReference type="PDB" id="9GD0">
    <property type="method" value="EM"/>
    <property type="resolution" value="2.80 A"/>
    <property type="chains" value="A/E/K/O=1-136"/>
</dbReference>
<dbReference type="PDB" id="9GD1">
    <property type="method" value="EM"/>
    <property type="resolution" value="4.00 A"/>
    <property type="chains" value="A/E/K/O=1-136"/>
</dbReference>
<dbReference type="PDB" id="9GD2">
    <property type="method" value="EM"/>
    <property type="resolution" value="4.20 A"/>
    <property type="chains" value="A/E/K/O=1-136"/>
</dbReference>
<dbReference type="PDB" id="9GD3">
    <property type="method" value="EM"/>
    <property type="resolution" value="3.00 A"/>
    <property type="chains" value="A/E=1-136"/>
</dbReference>
<dbReference type="PDBsum" id="1F66"/>
<dbReference type="PDBsum" id="1KX3"/>
<dbReference type="PDBsum" id="1KX4"/>
<dbReference type="PDBsum" id="1KX5"/>
<dbReference type="PDBsum" id="1P34"/>
<dbReference type="PDBsum" id="1P3A"/>
<dbReference type="PDBsum" id="1P3B"/>
<dbReference type="PDBsum" id="1P3F"/>
<dbReference type="PDBsum" id="1P3G"/>
<dbReference type="PDBsum" id="1P3I"/>
<dbReference type="PDBsum" id="1P3K"/>
<dbReference type="PDBsum" id="1P3L"/>
<dbReference type="PDBsum" id="1P3M"/>
<dbReference type="PDBsum" id="1P3O"/>
<dbReference type="PDBsum" id="1P3P"/>
<dbReference type="PDBsum" id="1S32"/>
<dbReference type="PDBsum" id="1ZBB"/>
<dbReference type="PDBsum" id="1ZLA"/>
<dbReference type="PDBsum" id="2F8N"/>
<dbReference type="PDBsum" id="2FJ7"/>
<dbReference type="PDBsum" id="2HUE"/>
<dbReference type="PDBsum" id="2IO5"/>
<dbReference type="PDBsum" id="2L11"/>
<dbReference type="PDBsum" id="2L12"/>
<dbReference type="PDBsum" id="2NZD"/>
<dbReference type="PDBsum" id="3B6F"/>
<dbReference type="PDBsum" id="3B6G"/>
<dbReference type="PDBsum" id="3C1B"/>
<dbReference type="PDBsum" id="3C1C"/>
<dbReference type="PDBsum" id="3GV6"/>
<dbReference type="PDBsum" id="3KUY"/>
<dbReference type="PDBsum" id="3KWQ"/>
<dbReference type="PDBsum" id="3KXB"/>
<dbReference type="PDBsum" id="3LEL"/>
<dbReference type="PDBsum" id="3LJA"/>
<dbReference type="PDBsum" id="3LZ0"/>
<dbReference type="PDBsum" id="3LZ1"/>
<dbReference type="PDBsum" id="3MGP"/>
<dbReference type="PDBsum" id="3MGQ"/>
<dbReference type="PDBsum" id="3MGR"/>
<dbReference type="PDBsum" id="3MGS"/>
<dbReference type="PDBsum" id="3MNN"/>
<dbReference type="PDBsum" id="3MVD"/>
<dbReference type="PDBsum" id="3O62"/>
<dbReference type="PDBsum" id="3REH"/>
<dbReference type="PDBsum" id="3REI"/>
<dbReference type="PDBsum" id="3REJ"/>
<dbReference type="PDBsum" id="3REK"/>
<dbReference type="PDBsum" id="3REL"/>
<dbReference type="PDBsum" id="3TU4"/>
<dbReference type="PDBsum" id="3UT9"/>
<dbReference type="PDBsum" id="3UTA"/>
<dbReference type="PDBsum" id="3UTB"/>
<dbReference type="PDBsum" id="4EO5"/>
<dbReference type="PDBsum" id="4J8U"/>
<dbReference type="PDBsum" id="4J8V"/>
<dbReference type="PDBsum" id="4J8W"/>
<dbReference type="PDBsum" id="4J8X"/>
<dbReference type="PDBsum" id="4KGC"/>
<dbReference type="PDBsum" id="4LD9"/>
<dbReference type="PDBsum" id="4QEO"/>
<dbReference type="PDBsum" id="4R8P"/>
<dbReference type="PDBsum" id="4WU8"/>
<dbReference type="PDBsum" id="4WU9"/>
<dbReference type="PDBsum" id="4XUJ"/>
<dbReference type="PDBsum" id="4XZQ"/>
<dbReference type="PDBsum" id="4YS3"/>
<dbReference type="PDBsum" id="4Z66"/>
<dbReference type="PDBsum" id="4ZUX"/>
<dbReference type="PDBsum" id="5BS7"/>
<dbReference type="PDBsum" id="5BSA"/>
<dbReference type="PDBsum" id="5CP6"/>
<dbReference type="PDBsum" id="5DNM"/>
<dbReference type="PDBsum" id="5DNN"/>
<dbReference type="PDBsum" id="5E5A"/>
<dbReference type="PDBsum" id="5F99"/>
<dbReference type="PDBsum" id="5HQ2"/>
<dbReference type="PDBsum" id="5KGF"/>
<dbReference type="PDBsum" id="5MLU"/>
<dbReference type="PDBsum" id="5NL0"/>
<dbReference type="PDBsum" id="5O9G"/>
<dbReference type="PDBsum" id="5OMX"/>
<dbReference type="PDBsum" id="5ONG"/>
<dbReference type="PDBsum" id="5ONW"/>
<dbReference type="PDBsum" id="5OXV"/>
<dbReference type="PDBsum" id="5OY7"/>
<dbReference type="PDBsum" id="5X0X"/>
<dbReference type="PDBsum" id="5X0Y"/>
<dbReference type="PDBsum" id="5XBK"/>
<dbReference type="PDBsum" id="5XF6"/>
<dbReference type="PDBsum" id="5Z3L"/>
<dbReference type="PDBsum" id="5Z3O"/>
<dbReference type="PDBsum" id="5Z3U"/>
<dbReference type="PDBsum" id="5Z3V"/>
<dbReference type="PDBsum" id="6ESF"/>
<dbReference type="PDBsum" id="6ESG"/>
<dbReference type="PDBsum" id="6ESH"/>
<dbReference type="PDBsum" id="6ESI"/>
<dbReference type="PDBsum" id="6FQ5"/>
<dbReference type="PDBsum" id="6FQ6"/>
<dbReference type="PDBsum" id="6I84"/>
<dbReference type="PDBsum" id="6IRO"/>
<dbReference type="PDBsum" id="6IY2"/>
<dbReference type="PDBsum" id="6IY3"/>
<dbReference type="PDBsum" id="6JM9"/>
<dbReference type="PDBsum" id="6JMA"/>
<dbReference type="PDBsum" id="6KIU"/>
<dbReference type="PDBsum" id="6KIV"/>
<dbReference type="PDBsum" id="6KIW"/>
<dbReference type="PDBsum" id="6KIX"/>
<dbReference type="PDBsum" id="6KIZ"/>
<dbReference type="PDBsum" id="6KW3"/>
<dbReference type="PDBsum" id="6KW4"/>
<dbReference type="PDBsum" id="6KW5"/>
<dbReference type="PDBsum" id="6NE3"/>
<dbReference type="PDBsum" id="6NJ9"/>
<dbReference type="PDBsum" id="6NN6"/>
<dbReference type="PDBsum" id="6NOG"/>
<dbReference type="PDBsum" id="6NQA"/>
<dbReference type="PDBsum" id="6O22"/>
<dbReference type="PDBsum" id="6O96"/>
<dbReference type="PDBsum" id="6OM3"/>
<dbReference type="PDBsum" id="6PA7"/>
<dbReference type="PDBsum" id="6PWV"/>
<dbReference type="PDBsum" id="6PWW"/>
<dbReference type="PDBsum" id="6PWX"/>
<dbReference type="PDBsum" id="6R1T"/>
<dbReference type="PDBsum" id="6R1U"/>
<dbReference type="PDBsum" id="6R25"/>
<dbReference type="PDBsum" id="6RYR"/>
<dbReference type="PDBsum" id="6RYU"/>
<dbReference type="PDBsum" id="6S01"/>
<dbReference type="PDBsum" id="6T9L"/>
<dbReference type="PDBsum" id="6TDA"/>
<dbReference type="PDBsum" id="6UH5"/>
<dbReference type="PDBsum" id="6UXW"/>
<dbReference type="PDBsum" id="6VEN"/>
<dbReference type="PDBsum" id="6VYP"/>
<dbReference type="PDBsum" id="6W5I"/>
<dbReference type="PDBsum" id="6W5M"/>
<dbReference type="PDBsum" id="6W5N"/>
<dbReference type="PDBsum" id="6WKR"/>
<dbReference type="PDBsum" id="6WZ5"/>
<dbReference type="PDBsum" id="6WZ9"/>
<dbReference type="PDBsum" id="6X0N"/>
<dbReference type="PDBsum" id="6Z6P"/>
<dbReference type="PDBsum" id="6ZHX"/>
<dbReference type="PDBsum" id="6ZHY"/>
<dbReference type="PDBsum" id="7AT8"/>
<dbReference type="PDBsum" id="7E8I"/>
<dbReference type="PDBsum" id="7EA5"/>
<dbReference type="PDBsum" id="7EG6"/>
<dbReference type="PDBsum" id="7EGP"/>
<dbReference type="PDBsum" id="7ENN"/>
<dbReference type="PDBsum" id="7K6P"/>
<dbReference type="PDBsum" id="7K6Q"/>
<dbReference type="PDBsum" id="7KBD"/>
<dbReference type="PDBsum" id="7KBE"/>
<dbReference type="PDBsum" id="7KBF"/>
<dbReference type="PDBsum" id="7KTQ"/>
<dbReference type="PDBsum" id="7MBM"/>
<dbReference type="PDBsum" id="7MBN"/>
<dbReference type="PDBsum" id="7NKX"/>
<dbReference type="PDBsum" id="7NKY"/>
<dbReference type="PDBsum" id="7OH9"/>
<dbReference type="PDBsum" id="7OHA"/>
<dbReference type="PDBsum" id="7OHB"/>
<dbReference type="PDBsum" id="7OHC"/>
<dbReference type="PDBsum" id="7OTQ"/>
<dbReference type="PDBsum" id="7SSA"/>
<dbReference type="PDBsum" id="7SWY"/>
<dbReference type="PDBsum" id="7TN2"/>
<dbReference type="PDBsum" id="7UD5"/>
<dbReference type="PDBsum" id="7UNC"/>
<dbReference type="PDBsum" id="7UND"/>
<dbReference type="PDBsum" id="7VDT"/>
<dbReference type="PDBsum" id="7VDV"/>
<dbReference type="PDBsum" id="7VVU"/>
<dbReference type="PDBsum" id="7VVZ"/>
<dbReference type="PDBsum" id="7X3T"/>
<dbReference type="PDBsum" id="7X3V"/>
<dbReference type="PDBsum" id="7X3W"/>
<dbReference type="PDBsum" id="7X3X"/>
<dbReference type="PDBsum" id="7XFC"/>
<dbReference type="PDBsum" id="7XFH"/>
<dbReference type="PDBsum" id="7XFI"/>
<dbReference type="PDBsum" id="7XFJ"/>
<dbReference type="PDBsum" id="7XFL"/>
<dbReference type="PDBsum" id="7XFM"/>
<dbReference type="PDBsum" id="7XFN"/>
<dbReference type="PDBsum" id="7XNP"/>
<dbReference type="PDBsum" id="7XPX"/>
<dbReference type="PDBsum" id="7YI1"/>
<dbReference type="PDBsum" id="7YI4"/>
<dbReference type="PDBsum" id="7YI5"/>
<dbReference type="PDBsum" id="7YRG"/>
<dbReference type="PDBsum" id="7ZS9"/>
<dbReference type="PDBsum" id="7ZSA"/>
<dbReference type="PDBsum" id="7ZSB"/>
<dbReference type="PDBsum" id="8A3Y"/>
<dbReference type="PDBsum" id="8B0A"/>
<dbReference type="PDBsum" id="8BVW"/>
<dbReference type="PDBsum" id="8BYQ"/>
<dbReference type="PDBsum" id="8BZ1"/>
<dbReference type="PDBsum" id="8CBN"/>
<dbReference type="PDBsum" id="8CBQ"/>
<dbReference type="PDBsum" id="8CEO"/>
<dbReference type="PDBsum" id="8CWW"/>
<dbReference type="PDBsum" id="8CZE"/>
<dbReference type="PDBsum" id="8ETT"/>
<dbReference type="PDBsum" id="8ETV"/>
<dbReference type="PDBsum" id="8EUE"/>
<dbReference type="PDBsum" id="8EUJ"/>
<dbReference type="PDBsum" id="8F86"/>
<dbReference type="PDBsum" id="8G57"/>
<dbReference type="PDBsum" id="8G6G"/>
<dbReference type="PDBsum" id="8G6H"/>
<dbReference type="PDBsum" id="8G6Q"/>
<dbReference type="PDBsum" id="8G6S"/>
<dbReference type="PDBsum" id="8G86"/>
<dbReference type="PDBsum" id="8G88"/>
<dbReference type="PDBsum" id="8G8B"/>
<dbReference type="PDBsum" id="8G8G"/>
<dbReference type="PDBsum" id="8GPN"/>
<dbReference type="PDBsum" id="8HXX"/>
<dbReference type="PDBsum" id="8HXY"/>
<dbReference type="PDBsum" id="8HXZ"/>
<dbReference type="PDBsum" id="8HY0"/>
<dbReference type="PDBsum" id="8IHM"/>
<dbReference type="PDBsum" id="8IHN"/>
<dbReference type="PDBsum" id="8IHT"/>
<dbReference type="PDBsum" id="8JHO"/>
<dbReference type="PDBsum" id="8KD2"/>
<dbReference type="PDBsum" id="8KD4"/>
<dbReference type="PDBsum" id="8KD5"/>
<dbReference type="PDBsum" id="8KD6"/>
<dbReference type="PDBsum" id="8KD7"/>
<dbReference type="PDBsum" id="8OF4"/>
<dbReference type="PDBsum" id="8PC5"/>
<dbReference type="PDBsum" id="8PC6"/>
<dbReference type="PDBsum" id="8PEO"/>
<dbReference type="PDBsum" id="8PEP"/>
<dbReference type="PDBsum" id="8RUP"/>
<dbReference type="PDBsum" id="8RUQ"/>
<dbReference type="PDBsum" id="8SIY"/>
<dbReference type="PDBsum" id="8SKZ"/>
<dbReference type="PDBsum" id="8SVF"/>
<dbReference type="PDBsum" id="8T3T"/>
<dbReference type="PDBsum" id="8T3W"/>
<dbReference type="PDBsum" id="8T3Y"/>
<dbReference type="PDBsum" id="8T9F"/>
<dbReference type="PDBsum" id="8T9G"/>
<dbReference type="PDBsum" id="8T9H"/>
<dbReference type="PDBsum" id="8TAS"/>
<dbReference type="PDBsum" id="8TB9"/>
<dbReference type="PDBsum" id="8THU"/>
<dbReference type="PDBsum" id="8UW1"/>
<dbReference type="PDBsum" id="8UXQ"/>
<dbReference type="PDBsum" id="8V25"/>
<dbReference type="PDBsum" id="8V26"/>
<dbReference type="PDBsum" id="8V27"/>
<dbReference type="PDBsum" id="8V28"/>
<dbReference type="PDBsum" id="8V4Y"/>
<dbReference type="PDBsum" id="8V6V"/>
<dbReference type="PDBsum" id="8V7L"/>
<dbReference type="PDBsum" id="8VX5"/>
<dbReference type="PDBsum" id="8VX6"/>
<dbReference type="PDBsum" id="9B2S"/>
<dbReference type="PDBsum" id="9B2T"/>
<dbReference type="PDBsum" id="9B2U"/>
<dbReference type="PDBsum" id="9DBY"/>
<dbReference type="PDBsum" id="9DDE"/>
<dbReference type="PDBsum" id="9DG3"/>
<dbReference type="PDBsum" id="9DGG"/>
<dbReference type="PDBsum" id="9E1L"/>
<dbReference type="PDBsum" id="9E1M"/>
<dbReference type="PDBsum" id="9E1N"/>
<dbReference type="PDBsum" id="9E1O"/>
<dbReference type="PDBsum" id="9E1P"/>
<dbReference type="PDBsum" id="9E1Q"/>
<dbReference type="PDBsum" id="9E1R"/>
<dbReference type="PDBsum" id="9E1U"/>
<dbReference type="PDBsum" id="9E1V"/>
<dbReference type="PDBsum" id="9E1W"/>
<dbReference type="PDBsum" id="9E1X"/>
<dbReference type="PDBsum" id="9E1Y"/>
<dbReference type="PDBsum" id="9GD0"/>
<dbReference type="PDBsum" id="9GD1"/>
<dbReference type="PDBsum" id="9GD2"/>
<dbReference type="PDBsum" id="9GD3"/>
<dbReference type="EMDB" id="EMD-0458"/>
<dbReference type="EMDB" id="EMD-0468"/>
<dbReference type="EMDB" id="EMD-0480"/>
<dbReference type="EMDB" id="EMD-0777"/>
<dbReference type="EMDB" id="EMD-0778"/>
<dbReference type="EMDB" id="EMD-0779"/>
<dbReference type="EMDB" id="EMD-10058"/>
<dbReference type="EMDB" id="EMD-10059"/>
<dbReference type="EMDB" id="EMD-10415"/>
<dbReference type="EMDB" id="EMD-10465"/>
<dbReference type="EMDB" id="EMD-11102"/>
<dbReference type="EMDB" id="EMD-11910"/>
<dbReference type="EMDB" id="EMD-12449"/>
<dbReference type="EMDB" id="EMD-12450"/>
<dbReference type="EMDB" id="EMD-12897"/>
<dbReference type="EMDB" id="EMD-12898"/>
<dbReference type="EMDB" id="EMD-12899"/>
<dbReference type="EMDB" id="EMD-12900"/>
<dbReference type="EMDB" id="EMD-13065"/>
<dbReference type="EMDB" id="EMD-14927"/>
<dbReference type="EMDB" id="EMD-14928"/>
<dbReference type="EMDB" id="EMD-14929"/>
<dbReference type="EMDB" id="EMD-15127"/>
<dbReference type="EMDB" id="EMD-16274"/>
<dbReference type="EMDB" id="EMD-16331"/>
<dbReference type="EMDB" id="EMD-16335"/>
<dbReference type="EMDB" id="EMD-16611"/>
<dbReference type="EMDB" id="EMD-16842"/>
<dbReference type="EMDB" id="EMD-16845"/>
<dbReference type="EMDB" id="EMD-17944"/>
<dbReference type="EMDB" id="EMD-19513"/>
<dbReference type="EMDB" id="EMD-19514"/>
<dbReference type="EMDB" id="EMD-20281"/>
<dbReference type="EMDB" id="EMD-20512"/>
<dbReference type="EMDB" id="EMD-20513"/>
<dbReference type="EMDB" id="EMD-20514"/>
<dbReference type="EMDB" id="EMD-20934"/>
<dbReference type="EMDB" id="EMD-21157"/>
<dbReference type="EMDB" id="EMD-21542"/>
<dbReference type="EMDB" id="EMD-21543"/>
<dbReference type="EMDB" id="EMD-21544"/>
<dbReference type="EMDB" id="EMD-21707"/>
<dbReference type="EMDB" id="EMD-21970"/>
<dbReference type="EMDB" id="EMD-21971"/>
<dbReference type="EMDB" id="EMD-21980"/>
<dbReference type="EMDB" id="EMD-22691"/>
<dbReference type="EMDB" id="EMD-22692"/>
<dbReference type="EMDB" id="EMD-22790"/>
<dbReference type="EMDB" id="EMD-22791"/>
<dbReference type="EMDB" id="EMD-22792"/>
<dbReference type="EMDB" id="EMD-25406"/>
<dbReference type="EMDB" id="EMD-26620"/>
<dbReference type="EMDB" id="EMD-26621"/>
<dbReference type="EMDB" id="EMD-27030"/>
<dbReference type="EMDB" id="EMD-27096"/>
<dbReference type="EMDB" id="EMD-28915"/>
<dbReference type="EMDB" id="EMD-29778"/>
<dbReference type="EMDB" id="EMD-29781"/>
<dbReference type="EMDB" id="EMD-29837"/>
<dbReference type="EMDB" id="EMD-29843"/>
<dbReference type="EMDB" id="EMD-29845"/>
<dbReference type="EMDB" id="EMD-29850"/>
<dbReference type="EMDB" id="EMD-31106"/>
<dbReference type="EMDB" id="EMD-31137"/>
<dbReference type="EMDB" id="EMD-31217"/>
<dbReference type="EMDB" id="EMD-31925"/>
<dbReference type="EMDB" id="EMD-31926"/>
<dbReference type="EMDB" id="EMD-33171"/>
<dbReference type="EMDB" id="EMD-33172"/>
<dbReference type="EMDB" id="EMD-33173"/>
<dbReference type="EMDB" id="EMD-33174"/>
<dbReference type="EMDB" id="EMD-33175"/>
<dbReference type="EMDB" id="EMD-33176"/>
<dbReference type="EMDB" id="EMD-33177"/>
<dbReference type="EMDB" id="EMD-33322"/>
<dbReference type="EMDB" id="EMD-33385"/>
<dbReference type="EMDB" id="EMD-34053"/>
<dbReference type="EMDB" id="EMD-34055"/>
<dbReference type="EMDB" id="EMD-34195"/>
<dbReference type="EMDB" id="EMD-3765"/>
<dbReference type="EMDB" id="EMD-3947"/>
<dbReference type="EMDB" id="EMD-3948"/>
<dbReference type="EMDB" id="EMD-3949"/>
<dbReference type="EMDB" id="EMD-3950"/>
<dbReference type="EMDB" id="EMD-40522"/>
<dbReference type="EMDB" id="EMD-40569"/>
<dbReference type="EMDB" id="EMD-40789"/>
<dbReference type="EMDB" id="EMD-41011"/>
<dbReference type="EMDB" id="EMD-41015"/>
<dbReference type="EMDB" id="EMD-41016"/>
<dbReference type="EMDB" id="EMD-41109"/>
<dbReference type="EMDB" id="EMD-41110"/>
<dbReference type="EMDB" id="EMD-41111"/>
<dbReference type="EMDB" id="EMD-41113"/>
<dbReference type="EMDB" id="EMD-41141"/>
<dbReference type="EMDB" id="EMD-41146"/>
<dbReference type="EMDB" id="EMD-41272"/>
<dbReference type="EMDB" id="EMD-41839"/>
<dbReference type="EMDB" id="EMD-41851"/>
<dbReference type="EMDB" id="EMD-41852"/>
<dbReference type="EMDB" id="EMD-41853"/>
<dbReference type="EMDB" id="EMD-42636"/>
<dbReference type="EMDB" id="EMD-42774"/>
<dbReference type="EMDB" id="EMD-42898"/>
<dbReference type="EMDB" id="EMD-42899"/>
<dbReference type="EMDB" id="EMD-42900"/>
<dbReference type="EMDB" id="EMD-42901"/>
<dbReference type="EMDB" id="EMD-4297"/>
<dbReference type="EMDB" id="EMD-42977"/>
<dbReference type="EMDB" id="EMD-4298"/>
<dbReference type="EMDB" id="EMD-43000"/>
<dbReference type="EMDB" id="EMD-43001"/>
<dbReference type="EMDB" id="EMD-43002"/>
<dbReference type="EMDB" id="EMD-43003"/>
<dbReference type="EMDB" id="EMD-43004"/>
<dbReference type="EMDB" id="EMD-43005"/>
<dbReference type="EMDB" id="EMD-43608"/>
<dbReference type="EMDB" id="EMD-43609"/>
<dbReference type="EMDB" id="EMD-44113"/>
<dbReference type="EMDB" id="EMD-44114"/>
<dbReference type="EMDB" id="EMD-44115"/>
<dbReference type="EMDB" id="EMD-4429"/>
<dbReference type="EMDB" id="EMD-46728"/>
<dbReference type="EMDB" id="EMD-46732"/>
<dbReference type="EMDB" id="EMD-46733"/>
<dbReference type="EMDB" id="EMD-46771"/>
<dbReference type="EMDB" id="EMD-46822"/>
<dbReference type="EMDB" id="EMD-46823"/>
<dbReference type="EMDB" id="EMD-4705"/>
<dbReference type="EMDB" id="EMD-4710"/>
<dbReference type="EMDB" id="EMD-47412"/>
<dbReference type="EMDB" id="EMD-47413"/>
<dbReference type="EMDB" id="EMD-47414"/>
<dbReference type="EMDB" id="EMD-47415"/>
<dbReference type="EMDB" id="EMD-47416"/>
<dbReference type="EMDB" id="EMD-47417"/>
<dbReference type="EMDB" id="EMD-47418"/>
<dbReference type="EMDB" id="EMD-47421"/>
<dbReference type="EMDB" id="EMD-47422"/>
<dbReference type="EMDB" id="EMD-47423"/>
<dbReference type="EMDB" id="EMD-47424"/>
<dbReference type="EMDB" id="EMD-47425"/>
<dbReference type="EMDB" id="EMD-47427"/>
<dbReference type="EMDB" id="EMD-47428"/>
<dbReference type="EMDB" id="EMD-51238"/>
<dbReference type="EMDB" id="EMD-51241"/>
<dbReference type="EMDB" id="EMD-51244"/>
<dbReference type="EMDB" id="EMD-51247"/>
<dbReference type="EMDB" id="EMD-6699"/>
<dbReference type="EMDB" id="EMD-6700"/>
<dbReference type="EMDB" id="EMD-6879"/>
<dbReference type="EMDB" id="EMD-6880"/>
<dbReference type="EMDB" id="EMD-6882"/>
<dbReference type="EMDB" id="EMD-6883"/>
<dbReference type="EMDB" id="EMD-8246"/>
<dbReference type="EMDB" id="EMD-9356"/>
<dbReference type="EMDB" id="EMD-9384"/>
<dbReference type="EMDB" id="EMD-9843"/>
<dbReference type="EMDB" id="EMD-9844"/>
<dbReference type="SASBDB" id="P84233"/>
<dbReference type="SMR" id="P84233"/>
<dbReference type="BioGRID" id="674575">
    <property type="interactions" value="11"/>
</dbReference>
<dbReference type="DIP" id="DIP-37430N"/>
<dbReference type="IntAct" id="P84233">
    <property type="interactions" value="10"/>
</dbReference>
<dbReference type="iPTMnet" id="P84233"/>
<dbReference type="GeneID" id="108695575"/>
<dbReference type="GeneID" id="108704296"/>
<dbReference type="GeneID" id="108704298"/>
<dbReference type="GeneID" id="108705672"/>
<dbReference type="GeneID" id="108716540"/>
<dbReference type="GeneID" id="108716541"/>
<dbReference type="GeneID" id="121393613"/>
<dbReference type="GeneID" id="121394151"/>
<dbReference type="GeneID" id="121398064"/>
<dbReference type="GeneID" id="121398066"/>
<dbReference type="GeneID" id="121399123"/>
<dbReference type="GeneID" id="121399124"/>
<dbReference type="GeneID" id="121402225"/>
<dbReference type="KEGG" id="xla:108695575"/>
<dbReference type="KEGG" id="xla:108704298"/>
<dbReference type="KEGG" id="xla:108705672"/>
<dbReference type="KEGG" id="xla:108716540"/>
<dbReference type="KEGG" id="xla:108716541"/>
<dbReference type="AGR" id="Xenbase:XB-GENE-866635"/>
<dbReference type="Xenbase" id="XB-GENE-866635">
    <property type="gene designation" value="h3c14.L"/>
</dbReference>
<dbReference type="OMA" id="CLMPRIN"/>
<dbReference type="OrthoDB" id="9929128at2759"/>
<dbReference type="EvolutionaryTrace" id="P84233"/>
<dbReference type="Proteomes" id="UP000186698">
    <property type="component" value="Chromosome 3S"/>
</dbReference>
<dbReference type="Proteomes" id="UP000186698">
    <property type="component" value="Chromosome 5L"/>
</dbReference>
<dbReference type="Proteomes" id="UP000186698">
    <property type="component" value="Chromosome 5S"/>
</dbReference>
<dbReference type="Proteomes" id="UP000186698">
    <property type="component" value="Chromosome 6S"/>
</dbReference>
<dbReference type="Proteomes" id="UP000186698">
    <property type="component" value="Chromosome 9_10L"/>
</dbReference>
<dbReference type="Proteomes" id="UP000186698">
    <property type="component" value="Chromosome 9_10S"/>
</dbReference>
<dbReference type="Bgee" id="100049126">
    <property type="expression patterns" value="Expressed in oocyte and 8 other cell types or tissues"/>
</dbReference>
<dbReference type="GO" id="GO:0005654">
    <property type="term" value="C:nucleoplasm"/>
    <property type="evidence" value="ECO:0000304"/>
    <property type="project" value="Reactome"/>
</dbReference>
<dbReference type="GO" id="GO:0000786">
    <property type="term" value="C:nucleosome"/>
    <property type="evidence" value="ECO:0007669"/>
    <property type="project" value="UniProtKB-KW"/>
</dbReference>
<dbReference type="GO" id="GO:0003677">
    <property type="term" value="F:DNA binding"/>
    <property type="evidence" value="ECO:0007669"/>
    <property type="project" value="UniProtKB-KW"/>
</dbReference>
<dbReference type="GO" id="GO:0046982">
    <property type="term" value="F:protein heterodimerization activity"/>
    <property type="evidence" value="ECO:0007669"/>
    <property type="project" value="InterPro"/>
</dbReference>
<dbReference type="GO" id="GO:0030527">
    <property type="term" value="F:structural constituent of chromatin"/>
    <property type="evidence" value="ECO:0007669"/>
    <property type="project" value="InterPro"/>
</dbReference>
<dbReference type="CDD" id="cd22911">
    <property type="entry name" value="HFD_H3"/>
    <property type="match status" value="1"/>
</dbReference>
<dbReference type="DisProt" id="DP01389"/>
<dbReference type="FunFam" id="1.10.20.10:FF:000078">
    <property type="entry name" value="Histone H3"/>
    <property type="match status" value="1"/>
</dbReference>
<dbReference type="FunFam" id="1.10.20.10:FF:000044">
    <property type="entry name" value="Histone H3.3"/>
    <property type="match status" value="1"/>
</dbReference>
<dbReference type="Gene3D" id="1.10.20.10">
    <property type="entry name" value="Histone, subunit A"/>
    <property type="match status" value="1"/>
</dbReference>
<dbReference type="IDEAL" id="IID50147"/>
<dbReference type="InterPro" id="IPR009072">
    <property type="entry name" value="Histone-fold"/>
</dbReference>
<dbReference type="InterPro" id="IPR007125">
    <property type="entry name" value="Histone_H2A/H2B/H3"/>
</dbReference>
<dbReference type="InterPro" id="IPR000164">
    <property type="entry name" value="Histone_H3/CENP-A"/>
</dbReference>
<dbReference type="PANTHER" id="PTHR11426">
    <property type="entry name" value="HISTONE H3"/>
    <property type="match status" value="1"/>
</dbReference>
<dbReference type="Pfam" id="PF00125">
    <property type="entry name" value="Histone"/>
    <property type="match status" value="1"/>
</dbReference>
<dbReference type="PRINTS" id="PR00622">
    <property type="entry name" value="HISTONEH3"/>
</dbReference>
<dbReference type="SMART" id="SM00428">
    <property type="entry name" value="H3"/>
    <property type="match status" value="1"/>
</dbReference>
<dbReference type="SUPFAM" id="SSF47113">
    <property type="entry name" value="Histone-fold"/>
    <property type="match status" value="1"/>
</dbReference>
<dbReference type="PROSITE" id="PS00322">
    <property type="entry name" value="HISTONE_H3_1"/>
    <property type="match status" value="1"/>
</dbReference>
<dbReference type="PROSITE" id="PS00959">
    <property type="entry name" value="HISTONE_H3_2"/>
    <property type="match status" value="1"/>
</dbReference>
<name>H32_XENLA</name>
<feature type="initiator methionine" description="Removed" evidence="4">
    <location>
        <position position="1"/>
    </location>
</feature>
<feature type="chain" id="PRO_0000221265" description="Histone H3.2">
    <location>
        <begin position="2"/>
        <end position="136"/>
    </location>
</feature>
<feature type="region of interest" description="Disordered" evidence="9">
    <location>
        <begin position="1"/>
        <end position="43"/>
    </location>
</feature>
<feature type="modified residue" description="Asymmetric dimethylarginine; by PRMT6; alternate" evidence="8">
    <location>
        <position position="3"/>
    </location>
</feature>
<feature type="modified residue" description="Citrulline; alternate" evidence="8">
    <location>
        <position position="3"/>
    </location>
</feature>
<feature type="modified residue" description="Phosphothreonine; by HASPIN and VRK1" evidence="8">
    <location>
        <position position="4"/>
    </location>
</feature>
<feature type="modified residue" description="Allysine; alternate" evidence="8">
    <location>
        <position position="5"/>
    </location>
</feature>
<feature type="modified residue" description="N6,N6,N6-trimethyllysine; alternate" evidence="11">
    <location>
        <position position="5"/>
    </location>
</feature>
<feature type="modified residue" description="N6,N6-dimethyllysine; alternate" evidence="11">
    <location>
        <position position="5"/>
    </location>
</feature>
<feature type="modified residue" description="N6-(2-hydroxyisobutyryl)lysine; alternate" evidence="2">
    <location>
        <position position="5"/>
    </location>
</feature>
<feature type="modified residue" description="N6-acetyllysine; alternate" evidence="8">
    <location>
        <position position="5"/>
    </location>
</feature>
<feature type="modified residue" description="N6-crotonyllysine; alternate" evidence="8">
    <location>
        <position position="5"/>
    </location>
</feature>
<feature type="modified residue" description="N6-methyllysine; alternate" evidence="11">
    <location>
        <position position="5"/>
    </location>
</feature>
<feature type="modified residue" description="5-glutamyl dopamine; alternate" evidence="8">
    <location>
        <position position="6"/>
    </location>
</feature>
<feature type="modified residue" description="5-glutamyl serotonin; alternate" evidence="8">
    <location>
        <position position="6"/>
    </location>
</feature>
<feature type="modified residue" description="Phosphothreonine; by PKC" evidence="8">
    <location>
        <position position="7"/>
    </location>
</feature>
<feature type="modified residue" description="Citrulline; alternate" evidence="8">
    <location>
        <position position="9"/>
    </location>
</feature>
<feature type="modified residue" description="Symmetric dimethylarginine; by PRMT5; alternate" evidence="1">
    <location>
        <position position="9"/>
    </location>
</feature>
<feature type="modified residue" description="N6,N6,N6-trimethyllysine; alternate" evidence="8">
    <location>
        <position position="10"/>
    </location>
</feature>
<feature type="modified residue" description="N6,N6-dimethyllysine; alternate" evidence="8">
    <location>
        <position position="10"/>
    </location>
</feature>
<feature type="modified residue" description="N6-(2-hydroxyisobutyryl)lysine; alternate" evidence="2">
    <location>
        <position position="10"/>
    </location>
</feature>
<feature type="modified residue" description="N6-acetyllysine; alternate" evidence="8">
    <location>
        <position position="10"/>
    </location>
</feature>
<feature type="modified residue" description="N6-crotonyllysine; alternate" evidence="8">
    <location>
        <position position="10"/>
    </location>
</feature>
<feature type="modified residue" description="N6-lactoyllysine; alternate" evidence="8">
    <location>
        <position position="10"/>
    </location>
</feature>
<feature type="modified residue" description="N6-methyllysine; alternate" evidence="13">
    <location>
        <position position="10"/>
    </location>
</feature>
<feature type="modified residue" description="ADP-ribosylserine; alternate" evidence="2">
    <location>
        <position position="11"/>
    </location>
</feature>
<feature type="modified residue" description="Phosphoserine; alternate; by AURKB, AURKC, RPS6KA3, RPS6KA4 and RPS6KA5" evidence="8">
    <location>
        <position position="11"/>
    </location>
</feature>
<feature type="modified residue" description="Phosphothreonine; by PKC" evidence="8">
    <location>
        <position position="12"/>
    </location>
</feature>
<feature type="modified residue" description="N6-(2-hydroxyisobutyryl)lysine; alternate" evidence="2">
    <location>
        <position position="15"/>
    </location>
</feature>
<feature type="modified residue" description="N6-acetyllysine" evidence="11">
    <location>
        <position position="15"/>
    </location>
</feature>
<feature type="modified residue" description="N6-glutaryllysine; alternate" evidence="8">
    <location>
        <position position="15"/>
    </location>
</feature>
<feature type="modified residue" description="N6-lactoyllysine; alternate" evidence="5">
    <location>
        <position position="15"/>
    </location>
</feature>
<feature type="modified residue" description="Asymmetric dimethylarginine; by CARM1; alternate" evidence="11">
    <location>
        <position position="18"/>
    </location>
</feature>
<feature type="modified residue" description="Citrulline; alternate" evidence="8">
    <location>
        <position position="18"/>
    </location>
</feature>
<feature type="modified residue" description="N6-(2-hydroxyisobutyryl)lysine; alternate" evidence="2">
    <location>
        <position position="19"/>
    </location>
</feature>
<feature type="modified residue" description="N6-acetyllysine; alternate" evidence="8">
    <location>
        <position position="19"/>
    </location>
</feature>
<feature type="modified residue" description="N6-butyryllysine; alternate" evidence="3">
    <location>
        <position position="19"/>
    </location>
</feature>
<feature type="modified residue" description="N6-crotonyllysine; alternate" evidence="8">
    <location>
        <position position="19"/>
    </location>
</feature>
<feature type="modified residue" description="N6-glutaryllysine; alternate" evidence="8">
    <location>
        <position position="19"/>
    </location>
</feature>
<feature type="modified residue" description="N6-lactoyllysine; alternate" evidence="8">
    <location>
        <position position="19"/>
    </location>
</feature>
<feature type="modified residue" description="N6-methyllysine; alternate" evidence="8">
    <location>
        <position position="19"/>
    </location>
</feature>
<feature type="modified residue" description="N6-(2-hydroxyisobutyryl)lysine; alternate" evidence="2">
    <location>
        <position position="24"/>
    </location>
</feature>
<feature type="modified residue" description="N6-acetyllysine; alternate" evidence="8">
    <location>
        <position position="24"/>
    </location>
</feature>
<feature type="modified residue" description="N6-butyryllysine; alternate" evidence="3">
    <location>
        <position position="24"/>
    </location>
</feature>
<feature type="modified residue" description="N6-crotonyllysine; alternate" evidence="8">
    <location>
        <position position="24"/>
    </location>
</feature>
<feature type="modified residue" description="N6-glutaryllysine; alternate" evidence="8">
    <location>
        <position position="24"/>
    </location>
</feature>
<feature type="modified residue" description="N6-lactoyllysine; alternate" evidence="8">
    <location>
        <position position="24"/>
    </location>
</feature>
<feature type="modified residue" description="N6-methyllysine; alternate" evidence="8">
    <location>
        <position position="24"/>
    </location>
</feature>
<feature type="modified residue" description="Citrulline" evidence="8">
    <location>
        <position position="27"/>
    </location>
</feature>
<feature type="modified residue" description="N6,N6,N6-trimethyllysine; alternate" evidence="8">
    <location>
        <position position="28"/>
    </location>
</feature>
<feature type="modified residue" description="N6,N6-dimethyllysine; alternate" evidence="8">
    <location>
        <position position="28"/>
    </location>
</feature>
<feature type="modified residue" description="N6-(2-hydroxyisobutyryl)lysine; alternate" evidence="2">
    <location>
        <position position="28"/>
    </location>
</feature>
<feature type="modified residue" description="N6-acetyllysine; alternate" evidence="8">
    <location>
        <position position="28"/>
    </location>
</feature>
<feature type="modified residue" description="N6-crotonyllysine; alternate" evidence="8">
    <location>
        <position position="28"/>
    </location>
</feature>
<feature type="modified residue" description="N6-glutaryllysine; alternate" evidence="8">
    <location>
        <position position="28"/>
    </location>
</feature>
<feature type="modified residue" description="N6-lactoyllysine; alternate" evidence="8">
    <location>
        <position position="28"/>
    </location>
</feature>
<feature type="modified residue" description="N6-methyllysine; alternate" evidence="8">
    <location>
        <position position="28"/>
    </location>
</feature>
<feature type="modified residue" description="ADP-ribosylserine; alternate" evidence="2">
    <location>
        <position position="29"/>
    </location>
</feature>
<feature type="modified residue" description="Phosphoserine; alternate; by AURKB, AURKC and RPS6KA5" evidence="8">
    <location>
        <position position="29"/>
    </location>
</feature>
<feature type="modified residue" description="N6,N6,N6-trimethyllysine; alternate" evidence="8">
    <location>
        <position position="37"/>
    </location>
</feature>
<feature type="modified residue" description="N6,N6-dimethyllysine; alternate" evidence="8">
    <location>
        <position position="37"/>
    </location>
</feature>
<feature type="modified residue" description="N6-(2-hydroxyisobutyryl)lysine; alternate" evidence="2">
    <location>
        <position position="37"/>
    </location>
</feature>
<feature type="modified residue" description="N6-acetyllysine; alternate" evidence="8">
    <location>
        <position position="37"/>
    </location>
</feature>
<feature type="modified residue" description="N6-methyllysine; alternate" evidence="8">
    <location>
        <position position="37"/>
    </location>
</feature>
<feature type="modified residue" description="N6-methyllysine" evidence="2">
    <location>
        <position position="38"/>
    </location>
</feature>
<feature type="modified residue" description="Phosphotyrosine" evidence="8">
    <location>
        <position position="42"/>
    </location>
</feature>
<feature type="modified residue" description="N6,N6,N6-trimethyllysine; alternate" evidence="8">
    <location>
        <position position="57"/>
    </location>
</feature>
<feature type="modified residue" description="N6-(2-hydroxyisobutyryl)lysine; alternate" evidence="2">
    <location>
        <position position="57"/>
    </location>
</feature>
<feature type="modified residue" description="N6-acetyllysine; alternate" evidence="8">
    <location>
        <position position="57"/>
    </location>
</feature>
<feature type="modified residue" description="N6-crotonyllysine; alternate" evidence="8">
    <location>
        <position position="57"/>
    </location>
</feature>
<feature type="modified residue" description="N6-glutaryllysine; alternate" evidence="8">
    <location>
        <position position="57"/>
    </location>
</feature>
<feature type="modified residue" description="N6-lactoyllysine; alternate" evidence="5">
    <location>
        <position position="57"/>
    </location>
</feature>
<feature type="modified residue" description="N6-methyllysine; by EHMT2; alternate" evidence="8">
    <location>
        <position position="57"/>
    </location>
</feature>
<feature type="modified residue" description="N6-succinyllysine; alternate" evidence="5">
    <location>
        <position position="57"/>
    </location>
</feature>
<feature type="modified residue" description="Phosphoserine" evidence="8">
    <location>
        <position position="58"/>
    </location>
</feature>
<feature type="modified residue" description="N6-(2-hydroxyisobutyryl)lysine; alternate" evidence="2">
    <location>
        <position position="65"/>
    </location>
</feature>
<feature type="modified residue" description="N6-methyllysine; alternate" evidence="8">
    <location>
        <position position="65"/>
    </location>
</feature>
<feature type="modified residue" description="N6,N6,N6-trimethyllysine; alternate" evidence="5">
    <location>
        <position position="80"/>
    </location>
</feature>
<feature type="modified residue" description="N6,N6-dimethyllysine; alternate" evidence="8">
    <location>
        <position position="80"/>
    </location>
</feature>
<feature type="modified residue" description="N6-(2-hydroxyisobutyryl)lysine; alternate" evidence="2">
    <location>
        <position position="80"/>
    </location>
</feature>
<feature type="modified residue" description="N6-acetyllysine; alternate" evidence="8">
    <location>
        <position position="80"/>
    </location>
</feature>
<feature type="modified residue" description="N6-glutaryllysine; alternate" evidence="8">
    <location>
        <position position="80"/>
    </location>
</feature>
<feature type="modified residue" description="N6-lactoyllysine; alternate" evidence="8">
    <location>
        <position position="80"/>
    </location>
</feature>
<feature type="modified residue" description="N6-methyllysine; alternate" evidence="8">
    <location>
        <position position="80"/>
    </location>
</feature>
<feature type="modified residue" description="N6-succinyllysine; alternate" evidence="5">
    <location>
        <position position="80"/>
    </location>
</feature>
<feature type="modified residue" description="Phosphothreonine" evidence="8">
    <location>
        <position position="81"/>
    </location>
</feature>
<feature type="modified residue" description="Phosphoserine" evidence="6">
    <location>
        <position position="87"/>
    </location>
</feature>
<feature type="modified residue" description="Phosphothreonine" evidence="8">
    <location>
        <position position="108"/>
    </location>
</feature>
<feature type="modified residue" description="N6-acetyllysine; alternate" evidence="8">
    <location>
        <position position="116"/>
    </location>
</feature>
<feature type="modified residue" description="N6-glutaryllysine; alternate" evidence="8">
    <location>
        <position position="116"/>
    </location>
</feature>
<feature type="modified residue" description="N6-(2-hydroxyisobutyryl)lysine; alternate" evidence="2">
    <location>
        <position position="123"/>
    </location>
</feature>
<feature type="modified residue" description="N6-acetyllysine; alternate" evidence="8">
    <location>
        <position position="123"/>
    </location>
</feature>
<feature type="modified residue" description="N6-glutaryllysine; alternate" evidence="8">
    <location>
        <position position="123"/>
    </location>
</feature>
<feature type="modified residue" description="N6-methyllysine; alternate" evidence="8">
    <location>
        <position position="123"/>
    </location>
</feature>
<feature type="modified residue" description="N6-succinyllysine; alternate" evidence="8">
    <location>
        <position position="123"/>
    </location>
</feature>
<feature type="lipid moiety-binding region" description="S-palmitoyl cysteine" evidence="8">
    <location>
        <position position="111"/>
    </location>
</feature>
<feature type="strand" evidence="23">
    <location>
        <begin position="4"/>
        <end position="6"/>
    </location>
</feature>
<feature type="strand" evidence="22">
    <location>
        <begin position="7"/>
        <end position="10"/>
    </location>
</feature>
<feature type="strand" evidence="24">
    <location>
        <begin position="11"/>
        <end position="13"/>
    </location>
</feature>
<feature type="strand" evidence="23">
    <location>
        <begin position="16"/>
        <end position="18"/>
    </location>
</feature>
<feature type="strand" evidence="19">
    <location>
        <begin position="19"/>
        <end position="21"/>
    </location>
</feature>
<feature type="strand" evidence="19">
    <location>
        <begin position="27"/>
        <end position="29"/>
    </location>
</feature>
<feature type="strand" evidence="19">
    <location>
        <begin position="31"/>
        <end position="34"/>
    </location>
</feature>
<feature type="helix" evidence="19">
    <location>
        <begin position="46"/>
        <end position="57"/>
    </location>
</feature>
<feature type="helix" evidence="21">
    <location>
        <begin position="65"/>
        <end position="77"/>
    </location>
</feature>
<feature type="strand" evidence="18">
    <location>
        <begin position="80"/>
        <end position="82"/>
    </location>
</feature>
<feature type="helix" evidence="21">
    <location>
        <begin position="87"/>
        <end position="114"/>
    </location>
</feature>
<feature type="strand" evidence="21">
    <location>
        <begin position="118"/>
        <end position="120"/>
    </location>
</feature>
<feature type="helix" evidence="21">
    <location>
        <begin position="122"/>
        <end position="131"/>
    </location>
</feature>
<feature type="turn" evidence="20">
    <location>
        <begin position="132"/>
        <end position="135"/>
    </location>
</feature>
<reference key="1">
    <citation type="journal article" date="1985" name="Nucleic Acids Res.">
        <title>Individual Xenopus histone genes are replication-independent in oocytes and replication-dependent in Xenopus or mouse somatic cells.</title>
        <authorList>
            <person name="Old R.W."/>
            <person name="Sheikh S.A."/>
            <person name="Chambers A."/>
            <person name="Newton C.A."/>
            <person name="Mohammed A."/>
            <person name="Aldridge T.C."/>
        </authorList>
    </citation>
    <scope>NUCLEOTIDE SEQUENCE [GENOMIC DNA]</scope>
</reference>
<reference key="2">
    <citation type="journal article" date="1985" name="J. Mol. Biol.">
        <title>Genomic organization and nucleotide sequence of two distinct histone gene clusters from Xenopus laevis. Identification of novel conserved upstream sequence elements.</title>
        <authorList>
            <person name="Perry M."/>
            <person name="Thomsen G.H."/>
            <person name="Roeder R.G."/>
        </authorList>
    </citation>
    <scope>NUCLEOTIDE SEQUENCE [GENOMIC DNA] (GENE CLUSTERS X1H1 AND X1H3)</scope>
</reference>
<reference key="3">
    <citation type="submission" date="2007-03" db="EMBL/GenBank/DDBJ databases">
        <authorList>
            <consortium name="NIH - Xenopus Gene Collection (XGC) project"/>
        </authorList>
    </citation>
    <scope>NUCLEOTIDE SEQUENCE [LARGE SCALE MRNA]</scope>
    <source>
        <tissue>Embryo</tissue>
    </source>
</reference>
<reference key="4">
    <citation type="journal article" date="2002" name="Mol. Cell. Biol.">
        <title>Involvement of histone methylation and phosphorylation in regulation of transcription by thyroid hormone receptor.</title>
        <authorList>
            <person name="Li J."/>
            <person name="Lin Q."/>
            <person name="Yoon H.-G."/>
            <person name="Huang Z.-Q."/>
            <person name="Strahl B.D."/>
            <person name="Allis C.D."/>
            <person name="Wong J."/>
        </authorList>
    </citation>
    <scope>METHYLATION AT LYS-5; LYS-10 AND ARG-18</scope>
    <scope>PHOSPHORYLATION AT SER-11</scope>
    <scope>ACETYLATION AT LYS-15</scope>
</reference>
<reference key="5">
    <citation type="journal article" date="2002" name="J. Mol. Biol.">
        <title>Solvent mediated interactions in the structure of the nucleosome core particle at 1.9 A resolution.</title>
        <authorList>
            <person name="Davey C.A."/>
            <person name="Sargent D.F."/>
            <person name="Luger K."/>
            <person name="Maeder A.W."/>
            <person name="Richmond T.J."/>
        </authorList>
    </citation>
    <scope>X-RAY CRYSTALLOGRAPHY (1.9 ANGSTROMS) IN COMPLEX WITH H2A; H2B AND H4</scope>
</reference>
<reference evidence="14 15" key="6">
    <citation type="journal article" date="2020" name="Cell Rep.">
        <title>Mechanistic insights into regulation of the ALC1 remodeler by the nucleosome acidic patch.</title>
        <authorList>
            <person name="Lehmann L.C."/>
            <person name="Bacic L."/>
            <person name="Hewitt G."/>
            <person name="Brackmann K."/>
            <person name="Sabantsev A."/>
            <person name="Gaullier G."/>
            <person name="Pytharopoulou S."/>
            <person name="Degliesposti G."/>
            <person name="Okkenhaug H."/>
            <person name="Tan S."/>
            <person name="Costa A."/>
            <person name="Skehel J.M."/>
            <person name="Boulton S.J."/>
            <person name="Deindl S."/>
        </authorList>
    </citation>
    <scope>STRUCTURE BY ELECTRON MICROSCOPY (2.50 ANGSTROMS) OF NUCLEOSOME CORE COMPLEX IN COMPLEX WITH CHD1L</scope>
</reference>
<reference evidence="17" key="7">
    <citation type="journal article" date="2021" name="Elife">
        <title>Structure and dynamics of the chromatin remodeler ALC1 bound to a PARylated nucleosome.</title>
        <authorList>
            <person name="Bacic L."/>
            <person name="Gaullier G."/>
            <person name="Sabantsev A."/>
            <person name="Lehmann L.C."/>
            <person name="Brackmann K."/>
            <person name="Dimakou D."/>
            <person name="Halic M."/>
            <person name="Hewitt G."/>
            <person name="Boulton S.J."/>
            <person name="Deindl S."/>
        </authorList>
    </citation>
    <scope>STRUCTURE BY ELECTRON MICROSCOPY (4.80 ANGSTROMS) OF NUCLEOSOME CORE COMPLEX IN COMPLEX WITH CHD1L</scope>
</reference>
<reference evidence="16" key="8">
    <citation type="journal article" date="2021" name="Nat. Commun.">
        <title>Structural basis of ALC1/CHD1L autoinhibition and the mechanism of activation by the nucleosome.</title>
        <authorList>
            <person name="Wang L."/>
            <person name="Chen K."/>
            <person name="Chen Z."/>
        </authorList>
    </citation>
    <scope>STRUCTURE BY ELECTRON MICROSCOPY (2.80 ANGSTROMS) OF 2-136 OF NUCLEOSOME CORE COMPLEX IN COMPLEX WITH CHD1L</scope>
</reference>
<accession>P84233</accession>
<accession>A4FVE2</accession>
<accession>P02295</accession>
<accession>P02297</accession>
<accession>P16105</accession>
<accession>P17269</accession>
<accession>P17320</accession>
<evidence type="ECO:0000250" key="1"/>
<evidence type="ECO:0000250" key="2">
    <source>
        <dbReference type="UniProtKB" id="P68431"/>
    </source>
</evidence>
<evidence type="ECO:0000250" key="3">
    <source>
        <dbReference type="UniProtKB" id="P68433"/>
    </source>
</evidence>
<evidence type="ECO:0000250" key="4">
    <source>
        <dbReference type="UniProtKB" id="P84227"/>
    </source>
</evidence>
<evidence type="ECO:0000250" key="5">
    <source>
        <dbReference type="UniProtKB" id="P84228"/>
    </source>
</evidence>
<evidence type="ECO:0000250" key="6">
    <source>
        <dbReference type="UniProtKB" id="P84243"/>
    </source>
</evidence>
<evidence type="ECO:0000250" key="7">
    <source>
        <dbReference type="UniProtKB" id="P84245"/>
    </source>
</evidence>
<evidence type="ECO:0000250" key="8">
    <source>
        <dbReference type="UniProtKB" id="Q71DI3"/>
    </source>
</evidence>
<evidence type="ECO:0000256" key="9">
    <source>
        <dbReference type="SAM" id="MobiDB-lite"/>
    </source>
</evidence>
<evidence type="ECO:0000269" key="10">
    <source>
    </source>
</evidence>
<evidence type="ECO:0000269" key="11">
    <source>
    </source>
</evidence>
<evidence type="ECO:0000305" key="12"/>
<evidence type="ECO:0000305" key="13">
    <source>
    </source>
</evidence>
<evidence type="ECO:0007744" key="14">
    <source>
        <dbReference type="PDB" id="6ZHX"/>
    </source>
</evidence>
<evidence type="ECO:0007744" key="15">
    <source>
        <dbReference type="PDB" id="6ZHY"/>
    </source>
</evidence>
<evidence type="ECO:0007744" key="16">
    <source>
        <dbReference type="PDB" id="7ENN"/>
    </source>
</evidence>
<evidence type="ECO:0007744" key="17">
    <source>
        <dbReference type="PDB" id="7OTQ"/>
    </source>
</evidence>
<evidence type="ECO:0007829" key="18">
    <source>
        <dbReference type="PDB" id="1KX3"/>
    </source>
</evidence>
<evidence type="ECO:0007829" key="19">
    <source>
        <dbReference type="PDB" id="1KX5"/>
    </source>
</evidence>
<evidence type="ECO:0007829" key="20">
    <source>
        <dbReference type="PDB" id="1P3I"/>
    </source>
</evidence>
<evidence type="ECO:0007829" key="21">
    <source>
        <dbReference type="PDB" id="2HUE"/>
    </source>
</evidence>
<evidence type="ECO:0007829" key="22">
    <source>
        <dbReference type="PDB" id="3GV6"/>
    </source>
</evidence>
<evidence type="ECO:0007829" key="23">
    <source>
        <dbReference type="PDB" id="8HXX"/>
    </source>
</evidence>
<evidence type="ECO:0007829" key="24">
    <source>
        <dbReference type="PDB" id="8HXY"/>
    </source>
</evidence>
<sequence>MARTKQTARKSTGGKAPRKQLATKAARKSAPATGGVKKPHRYRPGTVALREIRRYQKSTELLIRKLPFQRLVREIAQDFKTDLRFQSSAVMALQEASEAYLVGLFEDTNLCAIHAKRVTIMPKDIQLARRIRGERA</sequence>